<comment type="function">
    <text evidence="7 10 16 17 18 19 21 24 27 28">E3 ubiquitin-protein ligase that mediates ubiquitination of various substrates and thereby plays a role in diffent processes including proliferation, innate immunity, apoptosis, immune response or autophagy (PubMed:22829933, PubMed:24144979, PubMed:29688809, PubMed:36111389). Ubiquitinates PIK3C2B and inhibits its activity by mediating the formation of 'Lys-48'-linked polyubiquitin chains; the function inhibits CD4 T-cell activation. Acts as a regulator of retrograde transport: together with MAGEL2, mediates the formation of 'Lys-63'-linked polyubiquitin chains at 'Lys-220' of WASHC1, leading to promote endosomal F-actin assembly (PubMed:23452853). Has a transcriptional repressor activity by cooperating with EPC1. Induces apoptosis by activating Jun N-terminal kinase and p38 kinase and also increases caspase-3-like activity independently of mitochondrial events. May function in male germ cell development. Has DNA-binding activity and preferentially bound to double-stranded DNA. Forms a complex with and ubiquitinates the ubiquitin-specific protease USP7, which in turn deubiquitinates RIPK1 resulting in the positive regulation of TNF-alpha-induced apoptosis (PubMed:24144979). In addition, acts with USP7 or PTPN11 as an inhibitor of the antiviral signaling pathway by promoting kinase TBK1 ubiquitination and degradation (PubMed:26358190, PubMed:29688809). Acts as a negative regulator of NOD2 signaling by mediating ubiquitination of NOD2, promoting its degradation by the proteasome (PubMed:22829933). Alternatively, facilitates mitophagy via stabilization of active TBK1 (PubMed:36111389). Negatively regulates autophagy flux under basal conditions by directly polyubiquitinating ULK1 (PubMed:35670107). During starvation-induced autophagy, catalyzes non-degradative ubiquitination of the kinase STK38L promoting its activation and phosphorylation of ULK1 leading to its ubiquitination and degradation to restrain the amplitude and duration of autophagy (PubMed:35670107).</text>
</comment>
<comment type="function">
    <text evidence="24">(Microbial infection) Positively regulates hepatitis C virus replication by suppressing type I IFN response during infection.</text>
</comment>
<comment type="catalytic activity">
    <reaction evidence="17 19 21 27">
        <text>S-ubiquitinyl-[E2 ubiquitin-conjugating enzyme]-L-cysteine + [acceptor protein]-L-lysine = [E2 ubiquitin-conjugating enzyme]-L-cysteine + N(6)-ubiquitinyl-[acceptor protein]-L-lysine.</text>
        <dbReference type="EC" id="2.3.2.27"/>
    </reaction>
</comment>
<comment type="pathway">
    <text evidence="16 17 21 27">Protein modification; protein ubiquitination.</text>
</comment>
<comment type="subunit">
    <text evidence="6 7 12 13 14 15 16 18 21 22 28 30">Homomultimerizes. Part of a complex consisting of TRIM27, USP7 and MAGEL2; directly interacts with USP7 (PubMed:26365382, PubMed:29688809). Interacts with PML, EIF3S6, EPC1, CHD4 and EID1. Interacts with MAGED4, MAGEF1 and MAGEL2. Interacts with PTPN11 (PubMed:26358190). Interacts with autophagy receptor p62/SQSTM1 (PubMed:36111389).</text>
</comment>
<comment type="subunit">
    <text evidence="23">(Microbial infection) Interacts with M.tuberculosis PtpA, whick blocks TRIM27-promoted JNK/p38 MAPK pathway activation and cell apoptosis.</text>
</comment>
<comment type="subunit">
    <text evidence="20">(Microbial infection) Interacts with herpes simplex virus protein ICP0.</text>
</comment>
<comment type="interaction">
    <interactant intactId="EBI-719493">
        <id>P14373</id>
    </interactant>
    <interactant intactId="EBI-717672">
        <id>Q9NUQ8</id>
        <label>ABCF3</label>
    </interactant>
    <organismsDiffer>false</organismsDiffer>
    <experiments>7</experiments>
</comment>
<comment type="interaction">
    <interactant intactId="EBI-719493">
        <id>P14373</id>
    </interactant>
    <interactant intactId="EBI-10714818">
        <id>Q4G176</id>
        <label>ACSF3</label>
    </interactant>
    <organismsDiffer>false</organismsDiffer>
    <experiments>3</experiments>
</comment>
<comment type="interaction">
    <interactant intactId="EBI-719493">
        <id>P14373</id>
    </interactant>
    <interactant intactId="EBI-8637627">
        <id>Q8WTP8</id>
        <label>AEN</label>
    </interactant>
    <organismsDiffer>false</organismsDiffer>
    <experiments>3</experiments>
</comment>
<comment type="interaction">
    <interactant intactId="EBI-719493">
        <id>P14373</id>
    </interactant>
    <interactant intactId="EBI-8583355">
        <id>Q9Y4X0</id>
        <label>AMMECR1</label>
    </interactant>
    <organismsDiffer>false</organismsDiffer>
    <experiments>3</experiments>
</comment>
<comment type="interaction">
    <interactant intactId="EBI-719493">
        <id>P14373</id>
    </interactant>
    <interactant intactId="EBI-10187270">
        <id>Q9Y2J4-4</id>
        <label>AMOTL2</label>
    </interactant>
    <organismsDiffer>false</organismsDiffer>
    <experiments>3</experiments>
</comment>
<comment type="interaction">
    <interactant intactId="EBI-719493">
        <id>P14373</id>
    </interactant>
    <interactant intactId="EBI-541426">
        <id>Q9BXS5</id>
        <label>AP1M1</label>
    </interactant>
    <organismsDiffer>false</organismsDiffer>
    <experiments>3</experiments>
</comment>
<comment type="interaction">
    <interactant intactId="EBI-719493">
        <id>P14373</id>
    </interactant>
    <interactant intactId="EBI-10312733">
        <id>Q9NR81</id>
        <label>ARHGEF3</label>
    </interactant>
    <organismsDiffer>false</organismsDiffer>
    <experiments>8</experiments>
</comment>
<comment type="interaction">
    <interactant intactId="EBI-719493">
        <id>P14373</id>
    </interactant>
    <interactant intactId="EBI-602199">
        <id>Q12774</id>
        <label>ARHGEF5</label>
    </interactant>
    <organismsDiffer>false</organismsDiffer>
    <experiments>6</experiments>
</comment>
<comment type="interaction">
    <interactant intactId="EBI-719493">
        <id>P14373</id>
    </interactant>
    <interactant intactId="EBI-948603">
        <id>Q03989</id>
        <label>ARID5A</label>
    </interactant>
    <organismsDiffer>false</organismsDiffer>
    <experiments>3</experiments>
</comment>
<comment type="interaction">
    <interactant intactId="EBI-719493">
        <id>P14373</id>
    </interactant>
    <interactant intactId="EBI-742909">
        <id>Q9H6L4</id>
        <label>ARMC7</label>
    </interactant>
    <organismsDiffer>false</organismsDiffer>
    <experiments>6</experiments>
</comment>
<comment type="interaction">
    <interactant intactId="EBI-719493">
        <id>P14373</id>
    </interactant>
    <interactant intactId="EBI-10258086">
        <id>Q7Z6K5</id>
        <label>ARPIN</label>
    </interactant>
    <organismsDiffer>false</organismsDiffer>
    <experiments>3</experiments>
</comment>
<comment type="interaction">
    <interactant intactId="EBI-719493">
        <id>P14373</id>
    </interactant>
    <interactant intactId="EBI-2866142">
        <id>Q32MH5</id>
        <label>ATOSA</label>
    </interactant>
    <organismsDiffer>false</organismsDiffer>
    <experiments>3</experiments>
</comment>
<comment type="interaction">
    <interactant intactId="EBI-719493">
        <id>P14373</id>
    </interactant>
    <interactant intactId="EBI-745689">
        <id>Q7L5A3</id>
        <label>ATOSB</label>
    </interactant>
    <organismsDiffer>false</organismsDiffer>
    <experiments>7</experiments>
</comment>
<comment type="interaction">
    <interactant intactId="EBI-719493">
        <id>P14373</id>
    </interactant>
    <interactant intactId="EBI-1166928">
        <id>Q8N5M1</id>
        <label>ATPAF2</label>
    </interactant>
    <organismsDiffer>false</organismsDiffer>
    <experiments>6</experiments>
</comment>
<comment type="interaction">
    <interactant intactId="EBI-719493">
        <id>P14373</id>
    </interactant>
    <interactant intactId="EBI-16429430">
        <id>A0A0S2Z4M1</id>
        <label>AXIN1</label>
    </interactant>
    <organismsDiffer>false</organismsDiffer>
    <experiments>3</experiments>
</comment>
<comment type="interaction">
    <interactant intactId="EBI-719493">
        <id>P14373</id>
    </interactant>
    <interactant intactId="EBI-710484">
        <id>O15169</id>
        <label>AXIN1</label>
    </interactant>
    <organismsDiffer>false</organismsDiffer>
    <experiments>3</experiments>
</comment>
<comment type="interaction">
    <interactant intactId="EBI-719493">
        <id>P14373</id>
    </interactant>
    <interactant intactId="EBI-745725">
        <id>Q9NWV8</id>
        <label>BABAM1</label>
    </interactant>
    <organismsDiffer>false</organismsDiffer>
    <experiments>7</experiments>
</comment>
<comment type="interaction">
    <interactant intactId="EBI-719493">
        <id>P14373</id>
    </interactant>
    <interactant intactId="EBI-1030678">
        <id>Q99933</id>
        <label>BAG1</label>
    </interactant>
    <organismsDiffer>false</organismsDiffer>
    <experiments>7</experiments>
</comment>
<comment type="interaction">
    <interactant intactId="EBI-719493">
        <id>P14373</id>
    </interactant>
    <interactant intactId="EBI-747185">
        <id>O95817</id>
        <label>BAG3</label>
    </interactant>
    <organismsDiffer>false</organismsDiffer>
    <experiments>3</experiments>
</comment>
<comment type="interaction">
    <interactant intactId="EBI-719493">
        <id>P14373</id>
    </interactant>
    <interactant intactId="EBI-356517">
        <id>Q9UL15</id>
        <label>BAG5</label>
    </interactant>
    <organismsDiffer>false</organismsDiffer>
    <experiments>6</experiments>
</comment>
<comment type="interaction">
    <interactant intactId="EBI-719493">
        <id>P14373</id>
    </interactant>
    <interactant intactId="EBI-745073">
        <id>Q9BXY8</id>
        <label>BEX2</label>
    </interactant>
    <organismsDiffer>false</organismsDiffer>
    <experiments>3</experiments>
</comment>
<comment type="interaction">
    <interactant intactId="EBI-719493">
        <id>P14373</id>
    </interactant>
    <interactant intactId="EBI-10174327">
        <id>A8K571</id>
        <label>BMP7</label>
    </interactant>
    <organismsDiffer>false</organismsDiffer>
    <experiments>3</experiments>
</comment>
<comment type="interaction">
    <interactant intactId="EBI-719493">
        <id>P14373</id>
    </interactant>
    <interactant intactId="EBI-1035195">
        <id>P18075</id>
        <label>BMP7</label>
    </interactant>
    <organismsDiffer>false</organismsDiffer>
    <experiments>4</experiments>
</comment>
<comment type="interaction">
    <interactant intactId="EBI-719493">
        <id>P14373</id>
    </interactant>
    <interactant intactId="EBI-358049">
        <id>Q13895</id>
        <label>BYSL</label>
    </interactant>
    <organismsDiffer>false</organismsDiffer>
    <experiments>6</experiments>
</comment>
<comment type="interaction">
    <interactant intactId="EBI-719493">
        <id>P14373</id>
    </interactant>
    <interactant intactId="EBI-1765641">
        <id>Q9Y6W3</id>
        <label>CAPN7</label>
    </interactant>
    <organismsDiffer>false</organismsDiffer>
    <experiments>3</experiments>
</comment>
<comment type="interaction">
    <interactant intactId="EBI-719493">
        <id>P14373</id>
    </interactant>
    <interactant intactId="EBI-3866279">
        <id>Q9BWT7</id>
        <label>CARD10</label>
    </interactant>
    <organismsDiffer>false</organismsDiffer>
    <experiments>3</experiments>
</comment>
<comment type="interaction">
    <interactant intactId="EBI-719493">
        <id>P14373</id>
    </interactant>
    <interactant intactId="EBI-744545">
        <id>Q8NEC5</id>
        <label>CATSPER1</label>
    </interactant>
    <organismsDiffer>false</organismsDiffer>
    <experiments>3</experiments>
</comment>
<comment type="interaction">
    <interactant intactId="EBI-719493">
        <id>P14373</id>
    </interactant>
    <interactant intactId="EBI-712912">
        <id>Q9HC52</id>
        <label>CBX8</label>
    </interactant>
    <organismsDiffer>false</organismsDiffer>
    <experiments>3</experiments>
</comment>
<comment type="interaction">
    <interactant intactId="EBI-719493">
        <id>P14373</id>
    </interactant>
    <interactant intactId="EBI-10171570">
        <id>Q68D86</id>
        <label>CCDC102B</label>
    </interactant>
    <organismsDiffer>false</organismsDiffer>
    <experiments>6</experiments>
</comment>
<comment type="interaction">
    <interactant intactId="EBI-719493">
        <id>P14373</id>
    </interactant>
    <interactant intactId="EBI-740814">
        <id>Q8N715</id>
        <label>CCDC185</label>
    </interactant>
    <organismsDiffer>false</organismsDiffer>
    <experiments>3</experiments>
</comment>
<comment type="interaction">
    <interactant intactId="EBI-719493">
        <id>P14373</id>
    </interactant>
    <interactant intactId="EBI-10238351">
        <id>Q9NVL8</id>
        <label>CCDC198</label>
    </interactant>
    <organismsDiffer>false</organismsDiffer>
    <experiments>3</experiments>
</comment>
<comment type="interaction">
    <interactant intactId="EBI-719493">
        <id>P14373</id>
    </interactant>
    <interactant intactId="EBI-749261">
        <id>Q9NVE4</id>
        <label>CCDC87</label>
    </interactant>
    <organismsDiffer>false</organismsDiffer>
    <experiments>3</experiments>
</comment>
<comment type="interaction">
    <interactant intactId="EBI-719493">
        <id>P14373</id>
    </interactant>
    <interactant intactId="EBI-719994">
        <id>Q53HC0</id>
        <label>CCDC92</label>
    </interactant>
    <organismsDiffer>false</organismsDiffer>
    <experiments>3</experiments>
</comment>
<comment type="interaction">
    <interactant intactId="EBI-719493">
        <id>P14373</id>
    </interactant>
    <interactant intactId="EBI-10175300">
        <id>Q8TD31-3</id>
        <label>CCHCR1</label>
    </interactant>
    <organismsDiffer>false</organismsDiffer>
    <experiments>3</experiments>
</comment>
<comment type="interaction">
    <interactant intactId="EBI-719493">
        <id>P14373</id>
    </interactant>
    <interactant intactId="EBI-10260504">
        <id>Q86Y33</id>
        <label>CDC20B</label>
    </interactant>
    <organismsDiffer>false</organismsDiffer>
    <experiments>3</experiments>
</comment>
<comment type="interaction">
    <interactant intactId="EBI-719493">
        <id>P14373</id>
    </interactant>
    <interactant intactId="EBI-11983537">
        <id>Q86Y33-5</id>
        <label>CDC20B</label>
    </interactant>
    <organismsDiffer>false</organismsDiffer>
    <experiments>3</experiments>
</comment>
<comment type="interaction">
    <interactant intactId="EBI-719493">
        <id>P14373</id>
    </interactant>
    <interactant intactId="EBI-396137">
        <id>Q9UJX2</id>
        <label>CDC23</label>
    </interactant>
    <organismsDiffer>false</organismsDiffer>
    <experiments>4</experiments>
</comment>
<comment type="interaction">
    <interactant intactId="EBI-719493">
        <id>P14373</id>
    </interactant>
    <interactant intactId="EBI-374980">
        <id>O00311</id>
        <label>CDC7</label>
    </interactant>
    <organismsDiffer>false</organismsDiffer>
    <experiments>3</experiments>
</comment>
<comment type="interaction">
    <interactant intactId="EBI-719493">
        <id>P14373</id>
    </interactant>
    <interactant intactId="EBI-746238">
        <id>Q07002</id>
        <label>CDK18</label>
    </interactant>
    <organismsDiffer>false</organismsDiffer>
    <experiments>3</experiments>
</comment>
<comment type="interaction">
    <interactant intactId="EBI-719493">
        <id>P14373</id>
    </interactant>
    <interactant intactId="EBI-3919850">
        <id>Q8IVW4</id>
        <label>CDKL3</label>
    </interactant>
    <organismsDiffer>false</organismsDiffer>
    <experiments>6</experiments>
</comment>
<comment type="interaction">
    <interactant intactId="EBI-719493">
        <id>P14373</id>
    </interactant>
    <interactant intactId="EBI-749051">
        <id>Q8IYR0</id>
        <label>CFAP206</label>
    </interactant>
    <organismsDiffer>false</organismsDiffer>
    <experiments>3</experiments>
</comment>
<comment type="interaction">
    <interactant intactId="EBI-719493">
        <id>P14373</id>
    </interactant>
    <interactant intactId="EBI-743375">
        <id>Q9NX63</id>
        <label>CHCHD3</label>
    </interactant>
    <organismsDiffer>false</organismsDiffer>
    <experiments>3</experiments>
</comment>
<comment type="interaction">
    <interactant intactId="EBI-719493">
        <id>P14373</id>
    </interactant>
    <interactant intactId="EBI-12093053">
        <id>O43247-2</id>
        <label>CIMIP4</label>
    </interactant>
    <organismsDiffer>false</organismsDiffer>
    <experiments>3</experiments>
</comment>
<comment type="interaction">
    <interactant intactId="EBI-719493">
        <id>P14373</id>
    </interactant>
    <interactant intactId="EBI-456371">
        <id>P61024</id>
        <label>CKS1B</label>
    </interactant>
    <organismsDiffer>false</organismsDiffer>
    <experiments>3</experiments>
</comment>
<comment type="interaction">
    <interactant intactId="EBI-719493">
        <id>P14373</id>
    </interactant>
    <interactant intactId="EBI-48447012">
        <id>Q2KHT3-1</id>
        <label>CLEC16A</label>
    </interactant>
    <organismsDiffer>false</organismsDiffer>
    <experiments>2</experiments>
</comment>
<comment type="interaction">
    <interactant intactId="EBI-719493">
        <id>P14373</id>
    </interactant>
    <interactant intactId="EBI-750020">
        <id>P49760</id>
        <label>CLK2</label>
    </interactant>
    <organismsDiffer>false</organismsDiffer>
    <experiments>4</experiments>
</comment>
<comment type="interaction">
    <interactant intactId="EBI-719493">
        <id>P14373</id>
    </interactant>
    <interactant intactId="EBI-741032">
        <id>Q8NE01</id>
        <label>CNNM3</label>
    </interactant>
    <organismsDiffer>false</organismsDiffer>
    <experiments>3</experiments>
</comment>
<comment type="interaction">
    <interactant intactId="EBI-719493">
        <id>P14373</id>
    </interactant>
    <interactant intactId="EBI-1053725">
        <id>P10606</id>
        <label>COX5B</label>
    </interactant>
    <organismsDiffer>false</organismsDiffer>
    <experiments>3</experiments>
</comment>
<comment type="interaction">
    <interactant intactId="EBI-719493">
        <id>P14373</id>
    </interactant>
    <interactant intactId="EBI-7097057">
        <id>Q96FN4</id>
        <label>CPNE2</label>
    </interactant>
    <organismsDiffer>false</organismsDiffer>
    <experiments>6</experiments>
</comment>
<comment type="interaction">
    <interactant intactId="EBI-719493">
        <id>P14373</id>
    </interactant>
    <interactant intactId="EBI-12012272">
        <id>Q9UBL6-2</id>
        <label>CPNE7</label>
    </interactant>
    <organismsDiffer>false</organismsDiffer>
    <experiments>3</experiments>
</comment>
<comment type="interaction">
    <interactant intactId="EBI-719493">
        <id>P14373</id>
    </interactant>
    <interactant intactId="EBI-10192698">
        <id>Q02930-3</id>
        <label>CREB5</label>
    </interactant>
    <organismsDiffer>false</organismsDiffer>
    <experiments>3</experiments>
</comment>
<comment type="interaction">
    <interactant intactId="EBI-719493">
        <id>P14373</id>
    </interactant>
    <interactant intactId="EBI-2959737">
        <id>Q16527</id>
        <label>CSRP2</label>
    </interactant>
    <organismsDiffer>false</organismsDiffer>
    <experiments>3</experiments>
</comment>
<comment type="interaction">
    <interactant intactId="EBI-719493">
        <id>P14373</id>
    </interactant>
    <interactant intactId="EBI-5453285">
        <id>Q2TBE0</id>
        <label>CWF19L2</label>
    </interactant>
    <organismsDiffer>false</organismsDiffer>
    <experiments>6</experiments>
</comment>
<comment type="interaction">
    <interactant intactId="EBI-719493">
        <id>P14373</id>
    </interactant>
    <interactant intactId="EBI-12205861">
        <id>Q8NFT6-2</id>
        <label>DBF4B</label>
    </interactant>
    <organismsDiffer>false</organismsDiffer>
    <experiments>3</experiments>
</comment>
<comment type="interaction">
    <interactant intactId="EBI-719493">
        <id>P14373</id>
    </interactant>
    <interactant intactId="EBI-8646694">
        <id>O43602</id>
        <label>DCX</label>
    </interactant>
    <organismsDiffer>false</organismsDiffer>
    <experiments>3</experiments>
</comment>
<comment type="interaction">
    <interactant intactId="EBI-719493">
        <id>P14373</id>
    </interactant>
    <interactant intactId="EBI-351257">
        <id>P26196</id>
        <label>DDX6</label>
    </interactant>
    <organismsDiffer>false</organismsDiffer>
    <experiments>6</experiments>
</comment>
<comment type="interaction">
    <interactant intactId="EBI-719493">
        <id>P14373</id>
    </interactant>
    <interactant intactId="EBI-529989">
        <id>Q9NRI5</id>
        <label>DISC1</label>
    </interactant>
    <organismsDiffer>false</organismsDiffer>
    <experiments>3</experiments>
</comment>
<comment type="interaction">
    <interactant intactId="EBI-719493">
        <id>P14373</id>
    </interactant>
    <interactant intactId="EBI-9679045">
        <id>Q9NQL9</id>
        <label>DMRT3</label>
    </interactant>
    <organismsDiffer>false</organismsDiffer>
    <experiments>6</experiments>
</comment>
<comment type="interaction">
    <interactant intactId="EBI-719493">
        <id>P14373</id>
    </interactant>
    <interactant intactId="EBI-11984733">
        <id>O60941-5</id>
        <label>DTNB</label>
    </interactant>
    <organismsDiffer>false</organismsDiffer>
    <experiments>3</experiments>
</comment>
<comment type="interaction">
    <interactant intactId="EBI-719493">
        <id>P14373</id>
    </interactant>
    <interactant intactId="EBI-465804">
        <id>Q96EV8</id>
        <label>DTNBP1</label>
    </interactant>
    <organismsDiffer>false</organismsDiffer>
    <experiments>3</experiments>
</comment>
<comment type="interaction">
    <interactant intactId="EBI-719493">
        <id>P14373</id>
    </interactant>
    <interactant intactId="EBI-2339219">
        <id>Q08426</id>
        <label>EHHADH</label>
    </interactant>
    <organismsDiffer>false</organismsDiffer>
    <experiments>6</experiments>
</comment>
<comment type="interaction">
    <interactant intactId="EBI-719493">
        <id>P14373</id>
    </interactant>
    <interactant intactId="EBI-353818">
        <id>O15371</id>
        <label>EIF3D</label>
    </interactant>
    <organismsDiffer>false</organismsDiffer>
    <experiments>6</experiments>
</comment>
<comment type="interaction">
    <interactant intactId="EBI-719493">
        <id>P14373</id>
    </interactant>
    <interactant intactId="EBI-347740">
        <id>P60228</id>
        <label>EIF3E</label>
    </interactant>
    <organismsDiffer>false</organismsDiffer>
    <experiments>7</experiments>
</comment>
<comment type="interaction">
    <interactant intactId="EBI-719493">
        <id>P14373</id>
    </interactant>
    <interactant intactId="EBI-299104">
        <id>P38919</id>
        <label>EIF4A3</label>
    </interactant>
    <organismsDiffer>false</organismsDiffer>
    <experiments>3</experiments>
</comment>
<comment type="interaction">
    <interactant intactId="EBI-719493">
        <id>P14373</id>
    </interactant>
    <interactant intactId="EBI-73440">
        <id>P06730</id>
        <label>EIF4E</label>
    </interactant>
    <organismsDiffer>false</organismsDiffer>
    <experiments>5</experiments>
</comment>
<comment type="interaction">
    <interactant intactId="EBI-719493">
        <id>P14373</id>
    </interactant>
    <interactant intactId="EBI-398610">
        <id>O60573</id>
        <label>EIF4E2</label>
    </interactant>
    <organismsDiffer>false</organismsDiffer>
    <experiments>3</experiments>
</comment>
<comment type="interaction">
    <interactant intactId="EBI-719493">
        <id>P14373</id>
    </interactant>
    <interactant intactId="EBI-744099">
        <id>Q9H0I2</id>
        <label>ENKD1</label>
    </interactant>
    <organismsDiffer>false</organismsDiffer>
    <experiments>3</experiments>
</comment>
<comment type="interaction">
    <interactant intactId="EBI-719493">
        <id>P14373</id>
    </interactant>
    <interactant intactId="EBI-1183307">
        <id>P19447</id>
        <label>ERCC3</label>
    </interactant>
    <organismsDiffer>false</organismsDiffer>
    <experiments>4</experiments>
</comment>
<comment type="interaction">
    <interactant intactId="EBI-719493">
        <id>P14373</id>
    </interactant>
    <interactant intactId="EBI-742102">
        <id>Q8IYI6</id>
        <label>EXOC8</label>
    </interactant>
    <organismsDiffer>false</organismsDiffer>
    <experiments>3</experiments>
</comment>
<comment type="interaction">
    <interactant intactId="EBI-719493">
        <id>P14373</id>
    </interactant>
    <interactant intactId="EBI-1752811">
        <id>Q9BQ89</id>
        <label>FAM110A</label>
    </interactant>
    <organismsDiffer>false</organismsDiffer>
    <experiments>3</experiments>
</comment>
<comment type="interaction">
    <interactant intactId="EBI-719493">
        <id>P14373</id>
    </interactant>
    <interactant intactId="EBI-16428876">
        <id>A0A0S2Z6M9</id>
        <label>FAM126A</label>
    </interactant>
    <organismsDiffer>false</organismsDiffer>
    <experiments>3</experiments>
</comment>
<comment type="interaction">
    <interactant intactId="EBI-719493">
        <id>P14373</id>
    </interactant>
    <interactant intactId="EBI-719941">
        <id>Q3B820</id>
        <label>FAM161A</label>
    </interactant>
    <organismsDiffer>false</organismsDiffer>
    <experiments>3</experiments>
</comment>
<comment type="interaction">
    <interactant intactId="EBI-719493">
        <id>P14373</id>
    </interactant>
    <interactant intactId="EBI-10292648">
        <id>Q96PV7-2</id>
        <label>FAM193B</label>
    </interactant>
    <organismsDiffer>false</organismsDiffer>
    <experiments>3</experiments>
</comment>
<comment type="interaction">
    <interactant intactId="EBI-719493">
        <id>P14373</id>
    </interactant>
    <interactant intactId="EBI-1384254">
        <id>Q86UY5</id>
        <label>FAM83A</label>
    </interactant>
    <organismsDiffer>false</organismsDiffer>
    <experiments>3</experiments>
</comment>
<comment type="interaction">
    <interactant intactId="EBI-719493">
        <id>P14373</id>
    </interactant>
    <interactant intactId="EBI-6658203">
        <id>Q86YD7</id>
        <label>FAM90A1</label>
    </interactant>
    <organismsDiffer>false</organismsDiffer>
    <experiments>3</experiments>
</comment>
<comment type="interaction">
    <interactant intactId="EBI-719493">
        <id>P14373</id>
    </interactant>
    <interactant intactId="EBI-3957237">
        <id>Q8IYD8</id>
        <label>FANCM</label>
    </interactant>
    <organismsDiffer>false</organismsDiffer>
    <experiments>3</experiments>
</comment>
<comment type="interaction">
    <interactant intactId="EBI-719493">
        <id>P14373</id>
    </interactant>
    <interactant intactId="EBI-2513774">
        <id>O95363</id>
        <label>FARS2</label>
    </interactant>
    <organismsDiffer>false</organismsDiffer>
    <experiments>3</experiments>
</comment>
<comment type="interaction">
    <interactant intactId="EBI-719493">
        <id>P14373</id>
    </interactant>
    <interactant intactId="EBI-747570">
        <id>Q7L8L6</id>
        <label>FASTKD5</label>
    </interactant>
    <organismsDiffer>false</organismsDiffer>
    <experiments>3</experiments>
</comment>
<comment type="interaction">
    <interactant intactId="EBI-719493">
        <id>P14373</id>
    </interactant>
    <interactant intactId="EBI-10244131">
        <id>Q8TES7-6</id>
        <label>FBF1</label>
    </interactant>
    <organismsDiffer>false</organismsDiffer>
    <experiments>3</experiments>
</comment>
<comment type="interaction">
    <interactant intactId="EBI-719493">
        <id>P14373</id>
    </interactant>
    <interactant intactId="EBI-741068">
        <id>Q969U6</id>
        <label>FBXW5</label>
    </interactant>
    <organismsDiffer>false</organismsDiffer>
    <experiments>6</experiments>
</comment>
<comment type="interaction">
    <interactant intactId="EBI-719493">
        <id>P14373</id>
    </interactant>
    <interactant intactId="EBI-10229248">
        <id>Q96C98</id>
        <label>FHL3</label>
    </interactant>
    <organismsDiffer>false</organismsDiffer>
    <experiments>3</experiments>
</comment>
<comment type="interaction">
    <interactant intactId="EBI-719493">
        <id>P14373</id>
    </interactant>
    <interactant intactId="EBI-10176227">
        <id>C0H5X2</id>
        <label>FLJ38668</label>
    </interactant>
    <organismsDiffer>false</organismsDiffer>
    <experiments>3</experiments>
</comment>
<comment type="interaction">
    <interactant intactId="EBI-719493">
        <id>P14373</id>
    </interactant>
    <interactant intactId="EBI-744935">
        <id>Q9BVV2</id>
        <label>FNDC11</label>
    </interactant>
    <organismsDiffer>false</organismsDiffer>
    <experiments>3</experiments>
</comment>
<comment type="interaction">
    <interactant intactId="EBI-719493">
        <id>P14373</id>
    </interactant>
    <interactant intactId="EBI-3916225">
        <id>Q99853</id>
        <label>FOXB1</label>
    </interactant>
    <organismsDiffer>false</organismsDiffer>
    <experiments>3</experiments>
</comment>
<comment type="interaction">
    <interactant intactId="EBI-719493">
        <id>P14373</id>
    </interactant>
    <interactant intactId="EBI-3956892">
        <id>Q99958</id>
        <label>FOXC2</label>
    </interactant>
    <organismsDiffer>false</organismsDiffer>
    <experiments>3</experiments>
</comment>
<comment type="interaction">
    <interactant intactId="EBI-719493">
        <id>P14373</id>
    </interactant>
    <interactant intactId="EBI-372506">
        <id>Q8TAE8</id>
        <label>GADD45GIP1</label>
    </interactant>
    <organismsDiffer>false</organismsDiffer>
    <experiments>3</experiments>
</comment>
<comment type="interaction">
    <interactant intactId="EBI-719493">
        <id>P14373</id>
    </interactant>
    <interactant intactId="EBI-7960826">
        <id>Q8NHY3</id>
        <label>GAS2L2</label>
    </interactant>
    <organismsDiffer>false</organismsDiffer>
    <experiments>3</experiments>
</comment>
<comment type="interaction">
    <interactant intactId="EBI-719493">
        <id>P14373</id>
    </interactant>
    <interactant intactId="EBI-923440">
        <id>Q8WXI9</id>
        <label>GATAD2B</label>
    </interactant>
    <organismsDiffer>false</organismsDiffer>
    <experiments>3</experiments>
</comment>
<comment type="interaction">
    <interactant intactId="EBI-719493">
        <id>P14373</id>
    </interactant>
    <interactant intactId="EBI-744104">
        <id>P55040</id>
        <label>GEM</label>
    </interactant>
    <organismsDiffer>false</organismsDiffer>
    <experiments>6</experiments>
</comment>
<comment type="interaction">
    <interactant intactId="EBI-719493">
        <id>P14373</id>
    </interactant>
    <interactant intactId="EBI-744302">
        <id>P14136</id>
        <label>GFAP</label>
    </interactant>
    <organismsDiffer>false</organismsDiffer>
    <experiments>6</experiments>
</comment>
<comment type="interaction">
    <interactant intactId="EBI-719493">
        <id>P14373</id>
    </interactant>
    <interactant intactId="EBI-2371750">
        <id>Q969S9</id>
        <label>GFM2</label>
    </interactant>
    <organismsDiffer>false</organismsDiffer>
    <experiments>3</experiments>
</comment>
<comment type="interaction">
    <interactant intactId="EBI-719493">
        <id>P14373</id>
    </interactant>
    <interactant intactId="EBI-748515">
        <id>Q8IVS8</id>
        <label>GLYCTK</label>
    </interactant>
    <organismsDiffer>false</organismsDiffer>
    <experiments>3</experiments>
</comment>
<comment type="interaction">
    <interactant intactId="EBI-719493">
        <id>P14373</id>
    </interactant>
    <interactant intactId="EBI-11975289">
        <id>Q9Y223-2</id>
        <label>GNE</label>
    </interactant>
    <organismsDiffer>false</organismsDiffer>
    <experiments>3</experiments>
</comment>
<comment type="interaction">
    <interactant intactId="EBI-719493">
        <id>P14373</id>
    </interactant>
    <interactant intactId="EBI-10275006">
        <id>Q8TDQ7</id>
        <label>GNPDA2</label>
    </interactant>
    <organismsDiffer>false</organismsDiffer>
    <experiments>4</experiments>
</comment>
<comment type="interaction">
    <interactant intactId="EBI-719493">
        <id>P14373</id>
    </interactant>
    <interactant intactId="EBI-12197555">
        <id>Q8TDQ7-2</id>
        <label>GNPDA2</label>
    </interactant>
    <organismsDiffer>false</organismsDiffer>
    <experiments>3</experiments>
</comment>
<comment type="interaction">
    <interactant intactId="EBI-719493">
        <id>P14373</id>
    </interactant>
    <interactant intactId="EBI-751540">
        <id>O95872</id>
        <label>GPANK1</label>
    </interactant>
    <organismsDiffer>false</organismsDiffer>
    <experiments>7</experiments>
</comment>
<comment type="interaction">
    <interactant intactId="EBI-719493">
        <id>P14373</id>
    </interactant>
    <interactant intactId="EBI-746309">
        <id>Q92917</id>
        <label>GPKOW</label>
    </interactant>
    <organismsDiffer>false</organismsDiffer>
    <experiments>3</experiments>
</comment>
<comment type="interaction">
    <interactant intactId="EBI-719493">
        <id>P14373</id>
    </interactant>
    <interactant intactId="EBI-2680889">
        <id>Q14449</id>
        <label>GRB14</label>
    </interactant>
    <organismsDiffer>false</organismsDiffer>
    <experiments>3</experiments>
</comment>
<comment type="interaction">
    <interactant intactId="EBI-719493">
        <id>P14373</id>
    </interactant>
    <interactant intactId="EBI-401755">
        <id>P62993</id>
        <label>GRB2</label>
    </interactant>
    <organismsDiffer>false</organismsDiffer>
    <experiments>3</experiments>
</comment>
<comment type="interaction">
    <interactant intactId="EBI-719493">
        <id>P14373</id>
    </interactant>
    <interactant intactId="EBI-372619">
        <id>Q14687</id>
        <label>GSE1</label>
    </interactant>
    <organismsDiffer>false</organismsDiffer>
    <experiments>5</experiments>
</comment>
<comment type="interaction">
    <interactant intactId="EBI-719493">
        <id>P14373</id>
    </interactant>
    <interactant intactId="EBI-11956675">
        <id>Q9GZV7</id>
        <label>HAPLN2</label>
    </interactant>
    <organismsDiffer>false</organismsDiffer>
    <experiments>3</experiments>
</comment>
<comment type="interaction">
    <interactant intactId="EBI-719493">
        <id>P14373</id>
    </interactant>
    <interactant intactId="EBI-2514791">
        <id>Q96CS2</id>
        <label>HAUS1</label>
    </interactant>
    <organismsDiffer>false</organismsDiffer>
    <experiments>3</experiments>
</comment>
<comment type="interaction">
    <interactant intactId="EBI-719493">
        <id>P14373</id>
    </interactant>
    <interactant intactId="EBI-9834454">
        <id>P08631-2</id>
        <label>HCK</label>
    </interactant>
    <organismsDiffer>false</organismsDiffer>
    <experiments>3</experiments>
</comment>
<comment type="interaction">
    <interactant intactId="EBI-719493">
        <id>P14373</id>
    </interactant>
    <interactant intactId="EBI-11953488">
        <id>P56524-2</id>
        <label>HDAC4</label>
    </interactant>
    <organismsDiffer>false</organismsDiffer>
    <experiments>3</experiments>
</comment>
<comment type="interaction">
    <interactant intactId="EBI-719493">
        <id>P14373</id>
    </interactant>
    <interactant intactId="EBI-16429135">
        <id>A0A0S2Z4Q4</id>
        <label>HGS</label>
    </interactant>
    <organismsDiffer>false</organismsDiffer>
    <experiments>3</experiments>
</comment>
<comment type="interaction">
    <interactant intactId="EBI-719493">
        <id>P14373</id>
    </interactant>
    <interactant intactId="EBI-740220">
        <id>O14964</id>
        <label>HGS</label>
    </interactant>
    <organismsDiffer>false</organismsDiffer>
    <experiments>3</experiments>
</comment>
<comment type="interaction">
    <interactant intactId="EBI-719493">
        <id>P14373</id>
    </interactant>
    <interactant intactId="EBI-12292427">
        <id>O75146-2</id>
        <label>HIP1R</label>
    </interactant>
    <organismsDiffer>false</organismsDiffer>
    <experiments>3</experiments>
</comment>
<comment type="interaction">
    <interactant intactId="EBI-719493">
        <id>P14373</id>
    </interactant>
    <interactant intactId="EBI-3893317">
        <id>P09067</id>
        <label>HOXB5</label>
    </interactant>
    <organismsDiffer>false</organismsDiffer>
    <experiments>3</experiments>
</comment>
<comment type="interaction">
    <interactant intactId="EBI-719493">
        <id>P14373</id>
    </interactant>
    <interactant intactId="EBI-745290">
        <id>P17482</id>
        <label>HOXB9</label>
    </interactant>
    <organismsDiffer>false</organismsDiffer>
    <experiments>3</experiments>
</comment>
<comment type="interaction">
    <interactant intactId="EBI-719493">
        <id>P14373</id>
    </interactant>
    <interactant intactId="EBI-1752118">
        <id>P31273</id>
        <label>HOXC8</label>
    </interactant>
    <organismsDiffer>false</organismsDiffer>
    <experiments>3</experiments>
</comment>
<comment type="interaction">
    <interactant intactId="EBI-719493">
        <id>P14373</id>
    </interactant>
    <interactant intactId="EBI-11065686">
        <id>Q9BYI3</id>
        <label>HYCC1</label>
    </interactant>
    <organismsDiffer>false</organismsDiffer>
    <experiments>6</experiments>
</comment>
<comment type="interaction">
    <interactant intactId="EBI-719493">
        <id>P14373</id>
    </interactant>
    <interactant intactId="EBI-8787606">
        <id>Q8IXS8</id>
        <label>HYCC2</label>
    </interactant>
    <organismsDiffer>false</organismsDiffer>
    <experiments>3</experiments>
</comment>
<comment type="interaction">
    <interactant intactId="EBI-719493">
        <id>P14373</id>
    </interactant>
    <interactant intactId="EBI-11955401">
        <id>Q86VF2-5</id>
        <label>IGFN1</label>
    </interactant>
    <organismsDiffer>false</organismsDiffer>
    <experiments>3</experiments>
</comment>
<comment type="interaction">
    <interactant intactId="EBI-719493">
        <id>P14373</id>
    </interactant>
    <interactant intactId="EBI-17178971">
        <id>Q14005-2</id>
        <label>IL16</label>
    </interactant>
    <organismsDiffer>false</organismsDiffer>
    <experiments>3</experiments>
</comment>
<comment type="interaction">
    <interactant intactId="EBI-719493">
        <id>P14373</id>
    </interactant>
    <interactant intactId="EBI-357925">
        <id>Q12905</id>
        <label>ILF2</label>
    </interactant>
    <organismsDiffer>false</organismsDiffer>
    <experiments>3</experiments>
</comment>
<comment type="interaction">
    <interactant intactId="EBI-719493">
        <id>P14373</id>
    </interactant>
    <interactant intactId="EBI-747644">
        <id>Q13418</id>
        <label>ILK</label>
    </interactant>
    <organismsDiffer>false</organismsDiffer>
    <experiments>4</experiments>
</comment>
<comment type="interaction">
    <interactant intactId="EBI-719493">
        <id>P14373</id>
    </interactant>
    <interactant intactId="EBI-715611">
        <id>Q9C086</id>
        <label>INO80B</label>
    </interactant>
    <organismsDiffer>false</organismsDiffer>
    <experiments>3</experiments>
</comment>
<comment type="interaction">
    <interactant intactId="EBI-719493">
        <id>P14373</id>
    </interactant>
    <interactant intactId="EBI-10236940">
        <id>Q15735</id>
        <label>INPP5J</label>
    </interactant>
    <organismsDiffer>false</organismsDiffer>
    <experiments>3</experiments>
</comment>
<comment type="interaction">
    <interactant intactId="EBI-719493">
        <id>P14373</id>
    </interactant>
    <interactant intactId="EBI-10990676">
        <id>Q96PC2</id>
        <label>IP6K3</label>
    </interactant>
    <organismsDiffer>false</organismsDiffer>
    <experiments>3</experiments>
</comment>
<comment type="interaction">
    <interactant intactId="EBI-719493">
        <id>P14373</id>
    </interactant>
    <interactant intactId="EBI-745878">
        <id>Q9H0B3</id>
        <label>IQCN</label>
    </interactant>
    <organismsDiffer>false</organismsDiffer>
    <experiments>3</experiments>
</comment>
<comment type="interaction">
    <interactant intactId="EBI-719493">
        <id>P14373</id>
    </interactant>
    <interactant intactId="EBI-10220600">
        <id>Q8NA54</id>
        <label>IQUB</label>
    </interactant>
    <organismsDiffer>false</organismsDiffer>
    <experiments>3</experiments>
</comment>
<comment type="interaction">
    <interactant intactId="EBI-719493">
        <id>P14373</id>
    </interactant>
    <interactant intactId="EBI-2510602">
        <id>Q15040</id>
        <label>JOSD1</label>
    </interactant>
    <organismsDiffer>false</organismsDiffer>
    <experiments>4</experiments>
</comment>
<comment type="interaction">
    <interactant intactId="EBI-719493">
        <id>P14373</id>
    </interactant>
    <interactant intactId="EBI-740244">
        <id>Q7Z3B3</id>
        <label>KANSL1</label>
    </interactant>
    <organismsDiffer>false</organismsDiffer>
    <experiments>4</experiments>
</comment>
<comment type="interaction">
    <interactant intactId="EBI-719493">
        <id>P14373</id>
    </interactant>
    <interactant intactId="EBI-750907">
        <id>Q9H8E8</id>
        <label>KAT14</label>
    </interactant>
    <organismsDiffer>false</organismsDiffer>
    <experiments>6</experiments>
</comment>
<comment type="interaction">
    <interactant intactId="EBI-719493">
        <id>P14373</id>
    </interactant>
    <interactant intactId="EBI-399080">
        <id>Q92993</id>
        <label>KAT5</label>
    </interactant>
    <organismsDiffer>false</organismsDiffer>
    <experiments>3</experiments>
</comment>
<comment type="interaction">
    <interactant intactId="EBI-719493">
        <id>P14373</id>
    </interactant>
    <interactant intactId="EBI-4397613">
        <id>Q7L273</id>
        <label>KCTD9</label>
    </interactant>
    <organismsDiffer>false</organismsDiffer>
    <experiments>6</experiments>
</comment>
<comment type="interaction">
    <interactant intactId="EBI-719493">
        <id>P14373</id>
    </interactant>
    <interactant intactId="EBI-2125614">
        <id>Q9BVG8</id>
        <label>KIFC3</label>
    </interactant>
    <organismsDiffer>false</organismsDiffer>
    <experiments>3</experiments>
</comment>
<comment type="interaction">
    <interactant intactId="EBI-719493">
        <id>P14373</id>
    </interactant>
    <interactant intactId="EBI-298429">
        <id>P04264</id>
        <label>KRT1</label>
    </interactant>
    <organismsDiffer>false</organismsDiffer>
    <experiments>4</experiments>
</comment>
<comment type="interaction">
    <interactant intactId="EBI-719493">
        <id>P14373</id>
    </interactant>
    <interactant intactId="EBI-2430095">
        <id>P12035</id>
        <label>KRT3</label>
    </interactant>
    <organismsDiffer>false</organismsDiffer>
    <experiments>3</experiments>
</comment>
<comment type="interaction">
    <interactant intactId="EBI-719493">
        <id>P14373</id>
    </interactant>
    <interactant intactId="EBI-2949715">
        <id>O95678</id>
        <label>KRT75</label>
    </interactant>
    <organismsDiffer>false</organismsDiffer>
    <experiments>3</experiments>
</comment>
<comment type="interaction">
    <interactant intactId="EBI-719493">
        <id>P14373</id>
    </interactant>
    <interactant intactId="EBI-2952745">
        <id>Q01546</id>
        <label>KRT76</label>
    </interactant>
    <organismsDiffer>false</organismsDiffer>
    <experiments>3</experiments>
</comment>
<comment type="interaction">
    <interactant intactId="EBI-719493">
        <id>P14373</id>
    </interactant>
    <interactant intactId="EBI-1052105">
        <id>Q14657</id>
        <label>LAGE3</label>
    </interactant>
    <organismsDiffer>false</organismsDiffer>
    <experiments>3</experiments>
</comment>
<comment type="interaction">
    <interactant intactId="EBI-719493">
        <id>P14373</id>
    </interactant>
    <interactant intactId="EBI-742828">
        <id>Q14847</id>
        <label>LASP1</label>
    </interactant>
    <organismsDiffer>false</organismsDiffer>
    <experiments>3</experiments>
</comment>
<comment type="interaction">
    <interactant intactId="EBI-719493">
        <id>P14373</id>
    </interactant>
    <interactant intactId="EBI-726510">
        <id>Q96BZ8</id>
        <label>LENG1</label>
    </interactant>
    <organismsDiffer>false</organismsDiffer>
    <experiments>3</experiments>
</comment>
<comment type="interaction">
    <interactant intactId="EBI-719493">
        <id>P14373</id>
    </interactant>
    <interactant intactId="EBI-10274069">
        <id>Q8TCE9</id>
        <label>LGALS14</label>
    </interactant>
    <organismsDiffer>false</organismsDiffer>
    <experiments>6</experiments>
</comment>
<comment type="interaction">
    <interactant intactId="EBI-719493">
        <id>P14373</id>
    </interactant>
    <interactant intactId="EBI-10286106">
        <id>Q96FQ7</id>
        <label>LINC00526</label>
    </interactant>
    <organismsDiffer>false</organismsDiffer>
    <experiments>3</experiments>
</comment>
<comment type="interaction">
    <interactant intactId="EBI-719493">
        <id>P14373</id>
    </interactant>
    <interactant intactId="EBI-719955">
        <id>Q96FE5</id>
        <label>LINGO1</label>
    </interactant>
    <organismsDiffer>false</organismsDiffer>
    <experiments>3</experiments>
</comment>
<comment type="interaction">
    <interactant intactId="EBI-719493">
        <id>P14373</id>
    </interactant>
    <interactant intactId="EBI-2830427">
        <id>Q03252</id>
        <label>LMNB2</label>
    </interactant>
    <organismsDiffer>false</organismsDiffer>
    <experiments>3</experiments>
</comment>
<comment type="interaction">
    <interactant intactId="EBI-719493">
        <id>P14373</id>
    </interactant>
    <interactant intactId="EBI-8639312">
        <id>P25800</id>
        <label>LMO1</label>
    </interactant>
    <organismsDiffer>false</organismsDiffer>
    <experiments>3</experiments>
</comment>
<comment type="interaction">
    <interactant intactId="EBI-719493">
        <id>P14373</id>
    </interactant>
    <interactant intactId="EBI-2798728">
        <id>P61968</id>
        <label>LMO4</label>
    </interactant>
    <organismsDiffer>false</organismsDiffer>
    <experiments>3</experiments>
</comment>
<comment type="interaction">
    <interactant intactId="EBI-719493">
        <id>P14373</id>
    </interactant>
    <interactant intactId="EBI-739832">
        <id>Q8TBB1</id>
        <label>LNX1</label>
    </interactant>
    <organismsDiffer>false</organismsDiffer>
    <experiments>3</experiments>
</comment>
<comment type="interaction">
    <interactant intactId="EBI-719493">
        <id>P14373</id>
    </interactant>
    <interactant intactId="EBI-2341787">
        <id>Q17RB8</id>
        <label>LONRF1</label>
    </interactant>
    <organismsDiffer>false</organismsDiffer>
    <experiments>3</experiments>
</comment>
<comment type="interaction">
    <interactant intactId="EBI-719493">
        <id>P14373</id>
    </interactant>
    <interactant intactId="EBI-77889">
        <id>Q9UI95</id>
        <label>MAD2L2</label>
    </interactant>
    <organismsDiffer>false</organismsDiffer>
    <experiments>3</experiments>
</comment>
<comment type="interaction">
    <interactant intactId="EBI-719493">
        <id>P14373</id>
    </interactant>
    <interactant intactId="EBI-5668174">
        <id>Q9UJ55</id>
        <label>MAGEL2</label>
    </interactant>
    <organismsDiffer>false</organismsDiffer>
    <experiments>4</experiments>
</comment>
<comment type="interaction">
    <interactant intactId="EBI-719493">
        <id>P14373</id>
    </interactant>
    <interactant intactId="EBI-746778">
        <id>Q96A72</id>
        <label>MAGOHB</label>
    </interactant>
    <organismsDiffer>false</organismsDiffer>
    <experiments>3</experiments>
</comment>
<comment type="interaction">
    <interactant intactId="EBI-719493">
        <id>P14373</id>
    </interactant>
    <interactant intactId="EBI-947402">
        <id>O60336</id>
        <label>MAPKBP1</label>
    </interactant>
    <organismsDiffer>false</organismsDiffer>
    <experiments>3</experiments>
</comment>
<comment type="interaction">
    <interactant intactId="EBI-719493">
        <id>P14373</id>
    </interactant>
    <interactant intactId="EBI-10317491">
        <id>Q9NZL9</id>
        <label>MAT2B</label>
    </interactant>
    <organismsDiffer>false</organismsDiffer>
    <experiments>3</experiments>
</comment>
<comment type="interaction">
    <interactant intactId="EBI-719493">
        <id>P14373</id>
    </interactant>
    <interactant intactId="EBI-355924">
        <id>P33993</id>
        <label>MCM7</label>
    </interactant>
    <organismsDiffer>false</organismsDiffer>
    <experiments>3</experiments>
</comment>
<comment type="interaction">
    <interactant intactId="EBI-719493">
        <id>P14373</id>
    </interactant>
    <interactant intactId="EBI-1104564">
        <id>Q9Y316</id>
        <label>MEMO1</label>
    </interactant>
    <organismsDiffer>false</organismsDiffer>
    <experiments>3</experiments>
</comment>
<comment type="interaction">
    <interactant intactId="EBI-719493">
        <id>P14373</id>
    </interactant>
    <interactant intactId="EBI-14086479">
        <id>Q8IVT4</id>
        <label>MGC50722</label>
    </interactant>
    <organismsDiffer>false</organismsDiffer>
    <experiments>3</experiments>
</comment>
<comment type="interaction">
    <interactant intactId="EBI-719493">
        <id>P14373</id>
    </interactant>
    <interactant intactId="EBI-10244342">
        <id>Q5JRA6-2</id>
        <label>MIA3</label>
    </interactant>
    <organismsDiffer>false</organismsDiffer>
    <experiments>3</experiments>
</comment>
<comment type="interaction">
    <interactant intactId="EBI-719493">
        <id>P14373</id>
    </interactant>
    <interactant intactId="EBI-10172526">
        <id>Q9UJV3-2</id>
        <label>MID2</label>
    </interactant>
    <organismsDiffer>false</organismsDiffer>
    <experiments>3</experiments>
</comment>
<comment type="interaction">
    <interactant intactId="EBI-719493">
        <id>P14373</id>
    </interactant>
    <interactant intactId="EBI-1757866">
        <id>P00540</id>
        <label>MOS</label>
    </interactant>
    <organismsDiffer>false</organismsDiffer>
    <experiments>3</experiments>
</comment>
<comment type="interaction">
    <interactant intactId="EBI-719493">
        <id>P14373</id>
    </interactant>
    <interactant intactId="EBI-1053902">
        <id>Q9NQ50</id>
        <label>MRPL40</label>
    </interactant>
    <organismsDiffer>false</organismsDiffer>
    <experiments>3</experiments>
</comment>
<comment type="interaction">
    <interactant intactId="EBI-719493">
        <id>P14373</id>
    </interactant>
    <interactant intactId="EBI-12330065">
        <id>Q9NZV6</id>
        <label>MSRB1</label>
    </interactant>
    <organismsDiffer>false</organismsDiffer>
    <experiments>3</experiments>
</comment>
<comment type="interaction">
    <interactant intactId="EBI-719493">
        <id>P14373</id>
    </interactant>
    <interactant intactId="EBI-766064">
        <id>Q9Y217</id>
        <label>MTMR6</label>
    </interactant>
    <organismsDiffer>false</organismsDiffer>
    <experiments>3</experiments>
</comment>
<comment type="interaction">
    <interactant intactId="EBI-719493">
        <id>P14373</id>
    </interactant>
    <interactant intactId="EBI-7950783">
        <id>Q96JP2</id>
        <label>MYO15B</label>
    </interactant>
    <organismsDiffer>false</organismsDiffer>
    <experiments>3</experiments>
</comment>
<comment type="interaction">
    <interactant intactId="EBI-719493">
        <id>P14373</id>
    </interactant>
    <interactant intactId="EBI-713635">
        <id>O43639</id>
        <label>NCK2</label>
    </interactant>
    <organismsDiffer>false</organismsDiffer>
    <experiments>6</experiments>
</comment>
<comment type="interaction">
    <interactant intactId="EBI-719493">
        <id>P14373</id>
    </interactant>
    <interactant intactId="EBI-455189">
        <id>Q15788</id>
        <label>NCOA1</label>
    </interactant>
    <organismsDiffer>false</organismsDiffer>
    <experiments>3</experiments>
</comment>
<comment type="interaction">
    <interactant intactId="EBI-719493">
        <id>P14373</id>
    </interactant>
    <interactant intactId="EBI-928842">
        <id>Q9GZM8</id>
        <label>NDEL1</label>
    </interactant>
    <organismsDiffer>false</organismsDiffer>
    <experiments>9</experiments>
</comment>
<comment type="interaction">
    <interactant intactId="EBI-719493">
        <id>P14373</id>
    </interactant>
    <interactant intactId="EBI-2880203">
        <id>O76041</id>
        <label>NEBL</label>
    </interactant>
    <organismsDiffer>false</organismsDiffer>
    <experiments>3</experiments>
</comment>
<comment type="interaction">
    <interactant intactId="EBI-719493">
        <id>P14373</id>
    </interactant>
    <interactant intactId="EBI-2108053">
        <id>Q14511</id>
        <label>NEDD9</label>
    </interactant>
    <organismsDiffer>false</organismsDiffer>
    <experiments>4</experiments>
</comment>
<comment type="interaction">
    <interactant intactId="EBI-719493">
        <id>P14373</id>
    </interactant>
    <interactant intactId="EBI-10281234">
        <id>Q969S2</id>
        <label>NEIL2</label>
    </interactant>
    <organismsDiffer>false</organismsDiffer>
    <experiments>6</experiments>
</comment>
<comment type="interaction">
    <interactant intactId="EBI-719493">
        <id>P14373</id>
    </interactant>
    <interactant intactId="EBI-740364">
        <id>Q9HC98</id>
        <label>NEK6</label>
    </interactant>
    <organismsDiffer>false</organismsDiffer>
    <experiments>3</experiments>
</comment>
<comment type="interaction">
    <interactant intactId="EBI-719493">
        <id>P14373</id>
    </interactant>
    <interactant intactId="EBI-11750983">
        <id>Q9HC98-4</id>
        <label>NEK6</label>
    </interactant>
    <organismsDiffer>false</organismsDiffer>
    <experiments>3</experiments>
</comment>
<comment type="interaction">
    <interactant intactId="EBI-719493">
        <id>P14373</id>
    </interactant>
    <interactant intactId="EBI-348444">
        <id>P18615</id>
        <label>NELFE</label>
    </interactant>
    <organismsDiffer>false</organismsDiffer>
    <experiments>3</experiments>
</comment>
<comment type="interaction">
    <interactant intactId="EBI-719493">
        <id>P14373</id>
    </interactant>
    <interactant intactId="EBI-740897">
        <id>Q9GZT8</id>
        <label>NIF3L1</label>
    </interactant>
    <organismsDiffer>false</organismsDiffer>
    <experiments>5</experiments>
</comment>
<comment type="interaction">
    <interactant intactId="EBI-719493">
        <id>P14373</id>
    </interactant>
    <interactant intactId="EBI-744782">
        <id>Q9Y5B8</id>
        <label>NME7</label>
    </interactant>
    <organismsDiffer>false</organismsDiffer>
    <experiments>3</experiments>
</comment>
<comment type="interaction">
    <interactant intactId="EBI-719493">
        <id>P14373</id>
    </interactant>
    <interactant intactId="EBI-7445625">
        <id>Q9HC29</id>
        <label>NOD2</label>
    </interactant>
    <organismsDiffer>false</organismsDiffer>
    <experiments>10</experiments>
</comment>
<comment type="interaction">
    <interactant intactId="EBI-719493">
        <id>P14373</id>
    </interactant>
    <interactant intactId="EBI-945833">
        <id>Q7Z3S9</id>
        <label>NOTCH2NLA</label>
    </interactant>
    <organismsDiffer>false</organismsDiffer>
    <experiments>3</experiments>
</comment>
<comment type="interaction">
    <interactant intactId="EBI-719493">
        <id>P14373</id>
    </interactant>
    <interactant intactId="EBI-10250949">
        <id>Q6NSM0</id>
        <label>NR1D2</label>
    </interactant>
    <organismsDiffer>false</organismsDiffer>
    <experiments>7</experiments>
</comment>
<comment type="interaction">
    <interactant intactId="EBI-719493">
        <id>P14373</id>
    </interactant>
    <interactant intactId="EBI-741158">
        <id>Q96HA8</id>
        <label>NTAQ1</label>
    </interactant>
    <organismsDiffer>false</organismsDiffer>
    <experiments>6</experiments>
</comment>
<comment type="interaction">
    <interactant intactId="EBI-719493">
        <id>P14373</id>
    </interactant>
    <interactant intactId="EBI-355720">
        <id>O43809</id>
        <label>NUDT21</label>
    </interactant>
    <organismsDiffer>false</organismsDiffer>
    <experiments>6</experiments>
</comment>
<comment type="interaction">
    <interactant intactId="EBI-719493">
        <id>P14373</id>
    </interactant>
    <interactant intactId="EBI-3932815">
        <id>P00973</id>
        <label>OAS1</label>
    </interactant>
    <organismsDiffer>false</organismsDiffer>
    <experiments>5</experiments>
</comment>
<comment type="interaction">
    <interactant intactId="EBI-719493">
        <id>P14373</id>
    </interactant>
    <interactant intactId="EBI-12081862">
        <id>P00973-2</id>
        <label>OAS1</label>
    </interactant>
    <organismsDiffer>false</organismsDiffer>
    <experiments>6</experiments>
</comment>
<comment type="interaction">
    <interactant intactId="EBI-719493">
        <id>P14373</id>
    </interactant>
    <interactant intactId="EBI-1753251">
        <id>Q99572</id>
        <label>P2RX7</label>
    </interactant>
    <organismsDiffer>false</organismsDiffer>
    <experiments>3</experiments>
</comment>
<comment type="interaction">
    <interactant intactId="EBI-719493">
        <id>P14373</id>
    </interactant>
    <interactant intactId="EBI-14066006">
        <id>Q4G0R1</id>
        <label>PIBF1</label>
    </interactant>
    <organismsDiffer>false</organismsDiffer>
    <experiments>3</experiments>
</comment>
<comment type="interaction">
    <interactant intactId="EBI-719493">
        <id>P14373</id>
    </interactant>
    <interactant intactId="EBI-641107">
        <id>O00750</id>
        <label>PIK3C2B</label>
    </interactant>
    <organismsDiffer>false</organismsDiffer>
    <experiments>5</experiments>
</comment>
<comment type="interaction">
    <interactant intactId="EBI-719493">
        <id>P14373</id>
    </interactant>
    <interactant intactId="EBI-2568609">
        <id>Q9BSJ6</id>
        <label>PIMREG</label>
    </interactant>
    <organismsDiffer>false</organismsDiffer>
    <experiments>9</experiments>
</comment>
<comment type="interaction">
    <interactant intactId="EBI-719493">
        <id>P14373</id>
    </interactant>
    <interactant intactId="EBI-714158">
        <id>Q13526</id>
        <label>PIN1</label>
    </interactant>
    <organismsDiffer>false</organismsDiffer>
    <experiments>3</experiments>
</comment>
<comment type="interaction">
    <interactant intactId="EBI-719493">
        <id>P14373</id>
    </interactant>
    <interactant intactId="EBI-602382">
        <id>Q16512</id>
        <label>PKN1</label>
    </interactant>
    <organismsDiffer>false</organismsDiffer>
    <experiments>3</experiments>
</comment>
<comment type="interaction">
    <interactant intactId="EBI-719493">
        <id>P14373</id>
    </interactant>
    <interactant intactId="EBI-10241513">
        <id>Q494U1</id>
        <label>PLEKHN1</label>
    </interactant>
    <organismsDiffer>false</organismsDiffer>
    <experiments>3</experiments>
</comment>
<comment type="interaction">
    <interactant intactId="EBI-719493">
        <id>P14373</id>
    </interactant>
    <interactant intactId="EBI-713847">
        <id>P56282</id>
        <label>POLE2</label>
    </interactant>
    <organismsDiffer>false</organismsDiffer>
    <experiments>7</experiments>
</comment>
<comment type="interaction">
    <interactant intactId="EBI-719493">
        <id>P14373</id>
    </interactant>
    <interactant intactId="EBI-1055079">
        <id>O15160</id>
        <label>POLR1C</label>
    </interactant>
    <organismsDiffer>false</organismsDiffer>
    <experiments>6</experiments>
</comment>
<comment type="interaction">
    <interactant intactId="EBI-719493">
        <id>P14373</id>
    </interactant>
    <interactant intactId="EBI-5452779">
        <id>Q9BUI4</id>
        <label>POLR3C</label>
    </interactant>
    <organismsDiffer>false</organismsDiffer>
    <experiments>6</experiments>
</comment>
<comment type="interaction">
    <interactant intactId="EBI-719493">
        <id>P14373</id>
    </interactant>
    <interactant intactId="EBI-11956563">
        <id>Q96HA1-2</id>
        <label>POM121</label>
    </interactant>
    <organismsDiffer>false</organismsDiffer>
    <experiments>3</experiments>
</comment>
<comment type="interaction">
    <interactant intactId="EBI-719493">
        <id>P14373</id>
    </interactant>
    <interactant intactId="EBI-368321">
        <id>O60437</id>
        <label>PPL</label>
    </interactant>
    <organismsDiffer>false</organismsDiffer>
    <experiments>3</experiments>
</comment>
<comment type="interaction">
    <interactant intactId="EBI-719493">
        <id>P14373</id>
    </interactant>
    <interactant intactId="EBI-2557469">
        <id>Q6NYC8</id>
        <label>PPP1R18</label>
    </interactant>
    <organismsDiffer>false</organismsDiffer>
    <experiments>7</experiments>
</comment>
<comment type="interaction">
    <interactant intactId="EBI-719493">
        <id>P14373</id>
    </interactant>
    <interactant intactId="EBI-2860740">
        <id>Q96QH2</id>
        <label>PRAM1</label>
    </interactant>
    <organismsDiffer>false</organismsDiffer>
    <experiments>3</experiments>
</comment>
<comment type="interaction">
    <interactant intactId="EBI-719493">
        <id>P14373</id>
    </interactant>
    <interactant intactId="EBI-1181405">
        <id>Q13131</id>
        <label>PRKAA1</label>
    </interactant>
    <organismsDiffer>false</organismsDiffer>
    <experiments>3</experiments>
</comment>
<comment type="interaction">
    <interactant intactId="EBI-719493">
        <id>P14373</id>
    </interactant>
    <interactant intactId="EBI-2798416">
        <id>Q99633</id>
        <label>PRPF18</label>
    </interactant>
    <organismsDiffer>false</organismsDiffer>
    <experiments>3</experiments>
</comment>
<comment type="interaction">
    <interactant intactId="EBI-719493">
        <id>P14373</id>
    </interactant>
    <interactant intactId="EBI-1567797">
        <id>Q8WWY3</id>
        <label>PRPF31</label>
    </interactant>
    <organismsDiffer>false</organismsDiffer>
    <experiments>8</experiments>
</comment>
<comment type="interaction">
    <interactant intactId="EBI-719493">
        <id>P14373</id>
    </interactant>
    <interactant intactId="EBI-11986293">
        <id>P0CG20</id>
        <label>PRR35</label>
    </interactant>
    <organismsDiffer>false</organismsDiffer>
    <experiments>3</experiments>
</comment>
<comment type="interaction">
    <interactant intactId="EBI-719493">
        <id>P14373</id>
    </interactant>
    <interactant intactId="EBI-359352">
        <id>P25786</id>
        <label>PSMA1</label>
    </interactant>
    <organismsDiffer>false</organismsDiffer>
    <experiments>6</experiments>
</comment>
<comment type="interaction">
    <interactant intactId="EBI-719493">
        <id>P14373</id>
    </interactant>
    <interactant intactId="EBI-372273">
        <id>P20618</id>
        <label>PSMB1</label>
    </interactant>
    <organismsDiffer>false</organismsDiffer>
    <experiments>8</experiments>
</comment>
<comment type="interaction">
    <interactant intactId="EBI-719493">
        <id>P14373</id>
    </interactant>
    <interactant intactId="EBI-603340">
        <id>P49720</id>
        <label>PSMB3</label>
    </interactant>
    <organismsDiffer>false</organismsDiffer>
    <experiments>6</experiments>
</comment>
<comment type="interaction">
    <interactant intactId="EBI-719493">
        <id>P14373</id>
    </interactant>
    <interactant intactId="EBI-7199479">
        <id>Q8WUK0</id>
        <label>PTPMT1</label>
    </interactant>
    <organismsDiffer>false</organismsDiffer>
    <experiments>3</experiments>
</comment>
<comment type="interaction">
    <interactant intactId="EBI-719493">
        <id>P14373</id>
    </interactant>
    <interactant intactId="EBI-724478">
        <id>Q9H3S7</id>
        <label>PTPN23</label>
    </interactant>
    <organismsDiffer>false</organismsDiffer>
    <experiments>3</experiments>
</comment>
<comment type="interaction">
    <interactant intactId="EBI-719493">
        <id>P14373</id>
    </interactant>
    <interactant intactId="EBI-5464419">
        <id>Q9H0K6</id>
        <label>PUS7L</label>
    </interactant>
    <organismsDiffer>false</organismsDiffer>
    <experiments>7</experiments>
</comment>
<comment type="interaction">
    <interactant intactId="EBI-719493">
        <id>P14373</id>
    </interactant>
    <interactant intactId="EBI-347462">
        <id>P47897</id>
        <label>QARS1</label>
    </interactant>
    <organismsDiffer>false</organismsDiffer>
    <experiments>3</experiments>
</comment>
<comment type="interaction">
    <interactant intactId="EBI-719493">
        <id>P14373</id>
    </interactant>
    <interactant intactId="EBI-372165">
        <id>O14966</id>
        <label>RAB29</label>
    </interactant>
    <organismsDiffer>false</organismsDiffer>
    <experiments>3</experiments>
</comment>
<comment type="interaction">
    <interactant intactId="EBI-719493">
        <id>P14373</id>
    </interactant>
    <interactant intactId="EBI-10249635">
        <id>Q6FGU7</id>
        <label>RAB7L1</label>
    </interactant>
    <organismsDiffer>false</organismsDiffer>
    <experiments>3</experiments>
</comment>
<comment type="interaction">
    <interactant intactId="EBI-719493">
        <id>P14373</id>
    </interactant>
    <interactant intactId="EBI-744023">
        <id>Q9BTL3</id>
        <label>RAMAC</label>
    </interactant>
    <organismsDiffer>false</organismsDiffer>
    <experiments>3</experiments>
</comment>
<comment type="interaction">
    <interactant intactId="EBI-719493">
        <id>P14373</id>
    </interactant>
    <interactant intactId="EBI-780319">
        <id>Q86U06</id>
        <label>RBM23</label>
    </interactant>
    <organismsDiffer>false</organismsDiffer>
    <experiments>3</experiments>
</comment>
<comment type="interaction">
    <interactant intactId="EBI-719493">
        <id>P14373</id>
    </interactant>
    <interactant intactId="EBI-740773">
        <id>Q96IZ5</id>
        <label>RBM41</label>
    </interactant>
    <organismsDiffer>false</organismsDiffer>
    <experiments>3</experiments>
</comment>
<comment type="interaction">
    <interactant intactId="EBI-719493">
        <id>P14373</id>
    </interactant>
    <interactant intactId="EBI-743428">
        <id>Q9P2K3</id>
        <label>RCOR3</label>
    </interactant>
    <organismsDiffer>false</organismsDiffer>
    <experiments>3</experiments>
</comment>
<comment type="interaction">
    <interactant intactId="EBI-719493">
        <id>P14373</id>
    </interactant>
    <interactant intactId="EBI-746325">
        <id>Q8TCX5</id>
        <label>RHPN1</label>
    </interactant>
    <organismsDiffer>false</organismsDiffer>
    <experiments>3</experiments>
</comment>
<comment type="interaction">
    <interactant intactId="EBI-719493">
        <id>P14373</id>
    </interactant>
    <interactant intactId="EBI-10265323">
        <id>Q8N443</id>
        <label>RIBC1</label>
    </interactant>
    <organismsDiffer>false</organismsDiffer>
    <experiments>3</experiments>
</comment>
<comment type="interaction">
    <interactant intactId="EBI-719493">
        <id>P14373</id>
    </interactant>
    <interactant intactId="EBI-366017">
        <id>Q13671</id>
        <label>RIN1</label>
    </interactant>
    <organismsDiffer>false</organismsDiffer>
    <experiments>3</experiments>
</comment>
<comment type="interaction">
    <interactant intactId="EBI-719493">
        <id>P14373</id>
    </interactant>
    <interactant intactId="EBI-10248548">
        <id>Q63HN8-6</id>
        <label>RNF213</label>
    </interactant>
    <organismsDiffer>false</organismsDiffer>
    <experiments>3</experiments>
</comment>
<comment type="interaction">
    <interactant intactId="EBI-719493">
        <id>P14373</id>
    </interactant>
    <interactant intactId="EBI-16428950">
        <id>A0A0S2Z4G9</id>
        <label>RNF6</label>
    </interactant>
    <organismsDiffer>false</organismsDiffer>
    <experiments>3</experiments>
</comment>
<comment type="interaction">
    <interactant intactId="EBI-719493">
        <id>P14373</id>
    </interactant>
    <interactant intactId="EBI-748350">
        <id>Q9UHP6</id>
        <label>RSPH14</label>
    </interactant>
    <organismsDiffer>false</organismsDiffer>
    <experiments>3</experiments>
</comment>
<comment type="interaction">
    <interactant intactId="EBI-719493">
        <id>P14373</id>
    </interactant>
    <interactant intactId="EBI-16429492">
        <id>P28702-3</id>
        <label>RXRB</label>
    </interactant>
    <organismsDiffer>false</organismsDiffer>
    <experiments>3</experiments>
</comment>
<comment type="interaction">
    <interactant intactId="EBI-719493">
        <id>P14373</id>
    </interactant>
    <interactant intactId="EBI-748391">
        <id>Q9BWG6</id>
        <label>SCNM1</label>
    </interactant>
    <organismsDiffer>false</organismsDiffer>
    <experiments>6</experiments>
</comment>
<comment type="interaction">
    <interactant intactId="EBI-719493">
        <id>P14373</id>
    </interactant>
    <interactant intactId="EBI-727004">
        <id>O00560</id>
        <label>SDCBP</label>
    </interactant>
    <organismsDiffer>false</organismsDiffer>
    <experiments>3</experiments>
</comment>
<comment type="interaction">
    <interactant intactId="EBI-719493">
        <id>P14373</id>
    </interactant>
    <interactant intactId="EBI-10251550">
        <id>Q6NXQ0</id>
        <label>SFRS2</label>
    </interactant>
    <organismsDiffer>false</organismsDiffer>
    <experiments>3</experiments>
</comment>
<comment type="interaction">
    <interactant intactId="EBI-719493">
        <id>P14373</id>
    </interactant>
    <interactant intactId="EBI-747035">
        <id>Q9H788</id>
        <label>SH2D4A</label>
    </interactant>
    <organismsDiffer>false</organismsDiffer>
    <experiments>3</experiments>
</comment>
<comment type="interaction">
    <interactant intactId="EBI-719493">
        <id>P14373</id>
    </interactant>
    <interactant intactId="EBI-10308083">
        <id>Q9H788-2</id>
        <label>SH2D4A</label>
    </interactant>
    <organismsDiffer>false</organismsDiffer>
    <experiments>3</experiments>
</comment>
<comment type="interaction">
    <interactant intactId="EBI-719493">
        <id>P14373</id>
    </interactant>
    <interactant intactId="EBI-747107">
        <id>Q8IUQ4</id>
        <label>SIAH1</label>
    </interactant>
    <organismsDiffer>false</organismsDiffer>
    <experiments>3</experiments>
</comment>
<comment type="interaction">
    <interactant intactId="EBI-719493">
        <id>P14373</id>
    </interactant>
    <interactant intactId="EBI-10223741">
        <id>Q05CH4</id>
        <label>SLC15A3</label>
    </interactant>
    <organismsDiffer>false</organismsDiffer>
    <experiments>3</experiments>
</comment>
<comment type="interaction">
    <interactant intactId="EBI-719493">
        <id>P14373</id>
    </interactant>
    <interactant intactId="EBI-358489">
        <id>Q96GM5</id>
        <label>SMARCD1</label>
    </interactant>
    <organismsDiffer>false</organismsDiffer>
    <experiments>3</experiments>
</comment>
<comment type="interaction">
    <interactant intactId="EBI-719493">
        <id>P14373</id>
    </interactant>
    <interactant intactId="EBI-2872322">
        <id>Q9H0W8</id>
        <label>SMG9</label>
    </interactant>
    <organismsDiffer>false</organismsDiffer>
    <experiments>3</experiments>
</comment>
<comment type="interaction">
    <interactant intactId="EBI-719493">
        <id>P14373</id>
    </interactant>
    <interactant intactId="EBI-607085">
        <id>P09012</id>
        <label>SNRPA</label>
    </interactant>
    <organismsDiffer>false</organismsDiffer>
    <experiments>6</experiments>
</comment>
<comment type="interaction">
    <interactant intactId="EBI-719493">
        <id>P14373</id>
    </interactant>
    <interactant intactId="EBI-1053651">
        <id>P08579</id>
        <label>SNRPB2</label>
    </interactant>
    <organismsDiffer>false</organismsDiffer>
    <experiments>6</experiments>
</comment>
<comment type="interaction">
    <interactant intactId="EBI-719493">
        <id>P14373</id>
    </interactant>
    <interactant intactId="EBI-741237">
        <id>O60504</id>
        <label>SORBS3</label>
    </interactant>
    <organismsDiffer>false</organismsDiffer>
    <experiments>3</experiments>
</comment>
<comment type="interaction">
    <interactant intactId="EBI-719493">
        <id>P14373</id>
    </interactant>
    <interactant intactId="EBI-744066">
        <id>Q9UM82</id>
        <label>SPATA2</label>
    </interactant>
    <organismsDiffer>false</organismsDiffer>
    <experiments>4</experiments>
</comment>
<comment type="interaction">
    <interactant intactId="EBI-719493">
        <id>P14373</id>
    </interactant>
    <interactant intactId="EBI-372911">
        <id>Q9H0A9</id>
        <label>SPATC1L</label>
    </interactant>
    <organismsDiffer>false</organismsDiffer>
    <experiments>3</experiments>
</comment>
<comment type="interaction">
    <interactant intactId="EBI-719493">
        <id>P14373</id>
    </interactant>
    <interactant intactId="EBI-11995806">
        <id>Q9H0A9-2</id>
        <label>SPATC1L</label>
    </interactant>
    <organismsDiffer>false</organismsDiffer>
    <experiments>3</experiments>
</comment>
<comment type="interaction">
    <interactant intactId="EBI-719493">
        <id>P14373</id>
    </interactant>
    <interactant intactId="EBI-745021">
        <id>Q96FJ0</id>
        <label>STAMBPL1</label>
    </interactant>
    <organismsDiffer>false</organismsDiffer>
    <experiments>6</experiments>
</comment>
<comment type="interaction">
    <interactant intactId="EBI-719493">
        <id>P14373</id>
    </interactant>
    <interactant intactId="EBI-749295">
        <id>O75716</id>
        <label>STK16</label>
    </interactant>
    <organismsDiffer>false</organismsDiffer>
    <experiments>3</experiments>
</comment>
<comment type="interaction">
    <interactant intactId="EBI-719493">
        <id>P14373</id>
    </interactant>
    <interactant intactId="EBI-618295">
        <id>O00506</id>
        <label>STK25</label>
    </interactant>
    <organismsDiffer>false</organismsDiffer>
    <experiments>6</experiments>
</comment>
<comment type="interaction">
    <interactant intactId="EBI-719493">
        <id>P14373</id>
    </interactant>
    <interactant intactId="EBI-2682386">
        <id>Q96PV0</id>
        <label>SYNGAP1</label>
    </interactant>
    <organismsDiffer>false</organismsDiffer>
    <experiments>3</experiments>
</comment>
<comment type="interaction">
    <interactant intactId="EBI-719493">
        <id>P14373</id>
    </interactant>
    <interactant intactId="EBI-745392">
        <id>Q9BSW7</id>
        <label>SYT17</label>
    </interactant>
    <organismsDiffer>false</organismsDiffer>
    <experiments>3</experiments>
</comment>
<comment type="interaction">
    <interactant intactId="EBI-719493">
        <id>P14373</id>
    </interactant>
    <interactant intactId="EBI-10246152">
        <id>Q5T7P8-2</id>
        <label>SYT6</label>
    </interactant>
    <organismsDiffer>false</organismsDiffer>
    <experiments>3</experiments>
</comment>
<comment type="interaction">
    <interactant intactId="EBI-719493">
        <id>P14373</id>
    </interactant>
    <interactant intactId="EBI-747797">
        <id>Q9BSH4</id>
        <label>TACO1</label>
    </interactant>
    <organismsDiffer>false</organismsDiffer>
    <experiments>3</experiments>
</comment>
<comment type="interaction">
    <interactant intactId="EBI-719493">
        <id>P14373</id>
    </interactant>
    <interactant intactId="EBI-8787464">
        <id>Q9NU19</id>
        <label>TBC1D22B</label>
    </interactant>
    <organismsDiffer>false</organismsDiffer>
    <experiments>4</experiments>
</comment>
<comment type="interaction">
    <interactant intactId="EBI-719493">
        <id>P14373</id>
    </interactant>
    <interactant intactId="EBI-710310">
        <id>Q15560</id>
        <label>TCEA2</label>
    </interactant>
    <organismsDiffer>false</organismsDiffer>
    <experiments>6</experiments>
</comment>
<comment type="interaction">
    <interactant intactId="EBI-719493">
        <id>P14373</id>
    </interactant>
    <interactant intactId="EBI-11955057">
        <id>Q8N8B7-2</id>
        <label>TCEANC</label>
    </interactant>
    <organismsDiffer>false</organismsDiffer>
    <experiments>5</experiments>
</comment>
<comment type="interaction">
    <interactant intactId="EBI-719493">
        <id>P14373</id>
    </interactant>
    <interactant intactId="EBI-740781">
        <id>Q9BT92</id>
        <label>TCHP</label>
    </interactant>
    <organismsDiffer>false</organismsDiffer>
    <experiments>4</experiments>
</comment>
<comment type="interaction">
    <interactant intactId="EBI-719493">
        <id>P14373</id>
    </interactant>
    <interactant intactId="EBI-10176734">
        <id>D3DUQ6</id>
        <label>TEAD4</label>
    </interactant>
    <organismsDiffer>false</organismsDiffer>
    <experiments>3</experiments>
</comment>
<comment type="interaction">
    <interactant intactId="EBI-719493">
        <id>P14373</id>
    </interactant>
    <interactant intactId="EBI-747736">
        <id>Q15561</id>
        <label>TEAD4</label>
    </interactant>
    <organismsDiffer>false</organismsDiffer>
    <experiments>6</experiments>
</comment>
<comment type="interaction">
    <interactant intactId="EBI-719493">
        <id>P14373</id>
    </interactant>
    <interactant intactId="EBI-1765605">
        <id>Q96FV9</id>
        <label>THOC1</label>
    </interactant>
    <organismsDiffer>false</organismsDiffer>
    <experiments>3</experiments>
</comment>
<comment type="interaction">
    <interactant intactId="EBI-719493">
        <id>P14373</id>
    </interactant>
    <interactant intactId="EBI-717810">
        <id>Q08117</id>
        <label>TLE5</label>
    </interactant>
    <organismsDiffer>false</organismsDiffer>
    <experiments>4</experiments>
</comment>
<comment type="interaction">
    <interactant intactId="EBI-719493">
        <id>P14373</id>
    </interactant>
    <interactant intactId="EBI-10226570">
        <id>Q0P5Q0</id>
        <label>TMSB4X</label>
    </interactant>
    <organismsDiffer>false</organismsDiffer>
    <experiments>3</experiments>
</comment>
<comment type="interaction">
    <interactant intactId="EBI-719493">
        <id>P14373</id>
    </interactant>
    <interactant intactId="EBI-7543499">
        <id>Q8IZW8</id>
        <label>TNS4</label>
    </interactant>
    <organismsDiffer>false</organismsDiffer>
    <experiments>3</experiments>
</comment>
<comment type="interaction">
    <interactant intactId="EBI-719493">
        <id>P14373</id>
    </interactant>
    <interactant intactId="EBI-10184033">
        <id>Q5VU62</id>
        <label>TPM3</label>
    </interactant>
    <organismsDiffer>false</organismsDiffer>
    <experiments>3</experiments>
</comment>
<comment type="interaction">
    <interactant intactId="EBI-719493">
        <id>P14373</id>
    </interactant>
    <interactant intactId="EBI-750123">
        <id>Q9Y3C4</id>
        <label>TPRKB</label>
    </interactant>
    <organismsDiffer>false</organismsDiffer>
    <experiments>3</experiments>
</comment>
<comment type="interaction">
    <interactant intactId="EBI-719493">
        <id>P14373</id>
    </interactant>
    <interactant intactId="EBI-3650647">
        <id>Q9BUZ4</id>
        <label>TRAF4</label>
    </interactant>
    <organismsDiffer>false</organismsDiffer>
    <experiments>3</experiments>
</comment>
<comment type="interaction">
    <interactant intactId="EBI-719493">
        <id>P14373</id>
    </interactant>
    <interactant intactId="EBI-719493">
        <id>P14373</id>
        <label>TRIM27</label>
    </interactant>
    <organismsDiffer>false</organismsDiffer>
    <experiments>17</experiments>
</comment>
<comment type="interaction">
    <interactant intactId="EBI-719493">
        <id>P14373</id>
    </interactant>
    <interactant intactId="EBI-5235829">
        <id>Q8IWZ5</id>
        <label>TRIM42</label>
    </interactant>
    <organismsDiffer>false</organismsDiffer>
    <experiments>3</experiments>
</comment>
<comment type="interaction">
    <interactant intactId="EBI-719493">
        <id>P14373</id>
    </interactant>
    <interactant intactId="EBI-9867283">
        <id>Q86XT4</id>
        <label>TRIM50</label>
    </interactant>
    <organismsDiffer>false</organismsDiffer>
    <experiments>3</experiments>
</comment>
<comment type="interaction">
    <interactant intactId="EBI-719493">
        <id>P14373</id>
    </interactant>
    <interactant intactId="EBI-10241197">
        <id>Q3SY00</id>
        <label>TSGA10IP</label>
    </interactant>
    <organismsDiffer>false</organismsDiffer>
    <experiments>3</experiments>
</comment>
<comment type="interaction">
    <interactant intactId="EBI-719493">
        <id>P14373</id>
    </interactant>
    <interactant intactId="EBI-9053916">
        <id>Q63HK5</id>
        <label>TSHZ3</label>
    </interactant>
    <organismsDiffer>false</organismsDiffer>
    <experiments>3</experiments>
</comment>
<comment type="interaction">
    <interactant intactId="EBI-719493">
        <id>P14373</id>
    </interactant>
    <interactant intactId="EBI-7844656">
        <id>Q6ZVT0</id>
        <label>TTLL10</label>
    </interactant>
    <organismsDiffer>false</organismsDiffer>
    <experiments>3</experiments>
</comment>
<comment type="interaction">
    <interactant intactId="EBI-719493">
        <id>P14373</id>
    </interactant>
    <interactant intactId="EBI-2557363">
        <id>Q9NNX1</id>
        <label>TUFT1</label>
    </interactant>
    <organismsDiffer>false</organismsDiffer>
    <experiments>4</experiments>
</comment>
<comment type="interaction">
    <interactant intactId="EBI-719493">
        <id>P14373</id>
    </interactant>
    <interactant intactId="EBI-707554">
        <id>O14530</id>
        <label>TXNDC9</label>
    </interactant>
    <organismsDiffer>false</organismsDiffer>
    <experiments>3</experiments>
</comment>
<comment type="interaction">
    <interactant intactId="EBI-719493">
        <id>P14373</id>
    </interactant>
    <interactant intactId="EBI-7353612">
        <id>P57075-2</id>
        <label>UBASH3A</label>
    </interactant>
    <organismsDiffer>false</organismsDiffer>
    <experiments>3</experiments>
</comment>
<comment type="interaction">
    <interactant intactId="EBI-719493">
        <id>P14373</id>
    </interactant>
    <interactant intactId="EBI-473850">
        <id>P61086</id>
        <label>UBE2K</label>
    </interactant>
    <organismsDiffer>false</organismsDiffer>
    <experiments>12</experiments>
</comment>
<comment type="interaction">
    <interactant intactId="EBI-719493">
        <id>P14373</id>
    </interactant>
    <interactant intactId="EBI-742842">
        <id>Q9NZ43</id>
        <label>USE1</label>
    </interactant>
    <organismsDiffer>false</organismsDiffer>
    <experiments>3</experiments>
</comment>
<comment type="interaction">
    <interactant intactId="EBI-719493">
        <id>P14373</id>
    </interactant>
    <interactant intactId="EBI-743272">
        <id>O75604</id>
        <label>USP2</label>
    </interactant>
    <organismsDiffer>false</organismsDiffer>
    <experiments>6</experiments>
</comment>
<comment type="interaction">
    <interactant intactId="EBI-719493">
        <id>P14373</id>
    </interactant>
    <interactant intactId="EBI-302474">
        <id>Q93009</id>
        <label>USP7</label>
    </interactant>
    <organismsDiffer>false</organismsDiffer>
    <experiments>12</experiments>
</comment>
<comment type="interaction">
    <interactant intactId="EBI-719493">
        <id>P14373</id>
    </interactant>
    <interactant intactId="EBI-11737646">
        <id>Q5TAP6</id>
        <label>UTP14C</label>
    </interactant>
    <organismsDiffer>false</organismsDiffer>
    <experiments>3</experiments>
</comment>
<comment type="interaction">
    <interactant intactId="EBI-719493">
        <id>P14373</id>
    </interactant>
    <interactant intactId="EBI-5457544">
        <id>Q9BRU9</id>
        <label>UTP23</label>
    </interactant>
    <organismsDiffer>false</organismsDiffer>
    <experiments>3</experiments>
</comment>
<comment type="interaction">
    <interactant intactId="EBI-719493">
        <id>P14373</id>
    </interactant>
    <interactant intactId="EBI-11980193">
        <id>Q14119</id>
        <label>VEZF1</label>
    </interactant>
    <organismsDiffer>false</organismsDiffer>
    <experiments>3</experiments>
</comment>
<comment type="interaction">
    <interactant intactId="EBI-719493">
        <id>P14373</id>
    </interactant>
    <interactant intactId="EBI-741945">
        <id>Q9BRG1</id>
        <label>VPS25</label>
    </interactant>
    <organismsDiffer>false</organismsDiffer>
    <experiments>7</experiments>
</comment>
<comment type="interaction">
    <interactant intactId="EBI-719493">
        <id>P14373</id>
    </interactant>
    <interactant intactId="EBI-10243107">
        <id>Q548N1</id>
        <label>VPS28</label>
    </interactant>
    <organismsDiffer>false</organismsDiffer>
    <experiments>3</experiments>
</comment>
<comment type="interaction">
    <interactant intactId="EBI-719493">
        <id>P14373</id>
    </interactant>
    <interactant intactId="EBI-727424">
        <id>Q9UK41</id>
        <label>VPS28</label>
    </interactant>
    <organismsDiffer>false</organismsDiffer>
    <experiments>3</experiments>
</comment>
<comment type="interaction">
    <interactant intactId="EBI-719493">
        <id>P14373</id>
    </interactant>
    <interactant intactId="EBI-9031083">
        <id>Q9Y2B5</id>
        <label>VPS9D1</label>
    </interactant>
    <organismsDiffer>false</organismsDiffer>
    <experiments>3</experiments>
</comment>
<comment type="interaction">
    <interactant intactId="EBI-719493">
        <id>P14373</id>
    </interactant>
    <interactant intactId="EBI-10223946">
        <id>Q06250</id>
        <label>WT1-AS</label>
    </interactant>
    <organismsDiffer>false</organismsDiffer>
    <experiments>3</experiments>
</comment>
<comment type="interaction">
    <interactant intactId="EBI-719493">
        <id>P14373</id>
    </interactant>
    <interactant intactId="EBI-295222">
        <id>P23025</id>
        <label>XPA</label>
    </interactant>
    <organismsDiffer>false</organismsDiffer>
    <experiments>6</experiments>
</comment>
<comment type="interaction">
    <interactant intactId="EBI-719493">
        <id>P14373</id>
    </interactant>
    <interactant intactId="EBI-10300345">
        <id>Q9BW85</id>
        <label>YJU2</label>
    </interactant>
    <organismsDiffer>false</organismsDiffer>
    <experiments>3</experiments>
</comment>
<comment type="interaction">
    <interactant intactId="EBI-719493">
        <id>P14373</id>
    </interactant>
    <interactant intactId="EBI-711925">
        <id>Q05516</id>
        <label>ZBTB16</label>
    </interactant>
    <organismsDiffer>false</organismsDiffer>
    <experiments>5</experiments>
</comment>
<comment type="interaction">
    <interactant intactId="EBI-719493">
        <id>P14373</id>
    </interactant>
    <interactant intactId="EBI-740767">
        <id>Q53FD0</id>
        <label>ZC2HC1C</label>
    </interactant>
    <organismsDiffer>false</organismsDiffer>
    <experiments>3</experiments>
</comment>
<comment type="interaction">
    <interactant intactId="EBI-719493">
        <id>P14373</id>
    </interactant>
    <interactant intactId="EBI-6448783">
        <id>G3V1X1</id>
        <label>ZFC3H1</label>
    </interactant>
    <organismsDiffer>false</organismsDiffer>
    <experiments>3</experiments>
</comment>
<comment type="interaction">
    <interactant intactId="EBI-719493">
        <id>P14373</id>
    </interactant>
    <interactant intactId="EBI-10237226">
        <id>Q15911-2</id>
        <label>ZFHX3</label>
    </interactant>
    <organismsDiffer>false</organismsDiffer>
    <experiments>3</experiments>
</comment>
<comment type="interaction">
    <interactant intactId="EBI-719493">
        <id>P14373</id>
    </interactant>
    <interactant intactId="EBI-2849569">
        <id>Q9BQ24</id>
        <label>ZFYVE21</label>
    </interactant>
    <organismsDiffer>false</organismsDiffer>
    <experiments>3</experiments>
</comment>
<comment type="interaction">
    <interactant intactId="EBI-719493">
        <id>P14373</id>
    </interactant>
    <interactant intactId="EBI-16428984">
        <id>A0A0S2Z6H0</id>
        <label>ZGPAT</label>
    </interactant>
    <organismsDiffer>false</organismsDiffer>
    <experiments>3</experiments>
</comment>
<comment type="interaction">
    <interactant intactId="EBI-719493">
        <id>P14373</id>
    </interactant>
    <interactant intactId="EBI-3439227">
        <id>Q8N5A5</id>
        <label>ZGPAT</label>
    </interactant>
    <organismsDiffer>false</organismsDiffer>
    <experiments>4</experiments>
</comment>
<comment type="interaction">
    <interactant intactId="EBI-719493">
        <id>P14373</id>
    </interactant>
    <interactant intactId="EBI-10183064">
        <id>Q8N5A5-2</id>
        <label>ZGPAT</label>
    </interactant>
    <organismsDiffer>false</organismsDiffer>
    <experiments>9</experiments>
</comment>
<comment type="interaction">
    <interactant intactId="EBI-719493">
        <id>P14373</id>
    </interactant>
    <interactant intactId="EBI-746595">
        <id>Q96E35</id>
        <label>ZMYND19</label>
    </interactant>
    <organismsDiffer>false</organismsDiffer>
    <experiments>3</experiments>
</comment>
<comment type="interaction">
    <interactant intactId="EBI-719493">
        <id>P14373</id>
    </interactant>
    <interactant intactId="EBI-10177272">
        <id>P15622-3</id>
        <label>ZNF250</label>
    </interactant>
    <organismsDiffer>false</organismsDiffer>
    <experiments>3</experiments>
</comment>
<comment type="interaction">
    <interactant intactId="EBI-719493">
        <id>P14373</id>
    </interactant>
    <interactant intactId="EBI-744257">
        <id>Q96IQ9</id>
        <label>ZNF414</label>
    </interactant>
    <organismsDiffer>false</organismsDiffer>
    <experiments>3</experiments>
</comment>
<comment type="interaction">
    <interactant intactId="EBI-719493">
        <id>P14373</id>
    </interactant>
    <interactant intactId="EBI-740727">
        <id>Q8TAU3</id>
        <label>ZNF417</label>
    </interactant>
    <organismsDiffer>false</organismsDiffer>
    <experiments>7</experiments>
</comment>
<comment type="interaction">
    <interactant intactId="EBI-719493">
        <id>P14373</id>
    </interactant>
    <interactant intactId="EBI-740232">
        <id>Q9NWS9-2</id>
        <label>ZNF446</label>
    </interactant>
    <organismsDiffer>false</organismsDiffer>
    <experiments>3</experiments>
</comment>
<comment type="interaction">
    <interactant intactId="EBI-719493">
        <id>P14373</id>
    </interactant>
    <interactant intactId="EBI-10172590">
        <id>Q7Z3I7</id>
        <label>ZNF572</label>
    </interactant>
    <organismsDiffer>false</organismsDiffer>
    <experiments>6</experiments>
</comment>
<comment type="interaction">
    <interactant intactId="EBI-719493">
        <id>P14373</id>
    </interactant>
    <interactant intactId="EBI-746277">
        <id>Q9UK33</id>
        <label>ZNF580</label>
    </interactant>
    <organismsDiffer>false</organismsDiffer>
    <experiments>3</experiments>
</comment>
<comment type="interaction">
    <interactant intactId="EBI-719493">
        <id>P14373</id>
    </interactant>
    <interactant intactId="EBI-745520">
        <id>Q9P0T4</id>
        <label>ZNF581</label>
    </interactant>
    <organismsDiffer>false</organismsDiffer>
    <experiments>6</experiments>
</comment>
<comment type="interaction">
    <interactant intactId="EBI-719493">
        <id>P14373</id>
    </interactant>
    <interactant intactId="EBI-6427977">
        <id>Q96SQ5</id>
        <label>ZNF587</label>
    </interactant>
    <organismsDiffer>false</organismsDiffer>
    <experiments>3</experiments>
</comment>
<comment type="interaction">
    <interactant intactId="EBI-719493">
        <id>P14373</id>
    </interactant>
    <interactant intactId="EBI-16429014">
        <id>A0A0S2Z5X4</id>
        <label>ZNF688</label>
    </interactant>
    <organismsDiffer>false</organismsDiffer>
    <experiments>6</experiments>
</comment>
<comment type="interaction">
    <interactant intactId="EBI-719493">
        <id>P14373</id>
    </interactant>
    <interactant intactId="EBI-16429989">
        <id>A0A0S2Z6P0</id>
        <label>ZNF688</label>
    </interactant>
    <organismsDiffer>false</organismsDiffer>
    <experiments>6</experiments>
</comment>
<comment type="interaction">
    <interactant intactId="EBI-719493">
        <id>P14373</id>
    </interactant>
    <interactant intactId="EBI-10237274">
        <id>Q15937</id>
        <label>ZNF79</label>
    </interactant>
    <organismsDiffer>false</organismsDiffer>
    <experiments>3</experiments>
</comment>
<comment type="interaction">
    <interactant intactId="EBI-719493">
        <id>P14373</id>
    </interactant>
    <interactant intactId="EBI-10174671">
        <id>A8K932</id>
    </interactant>
    <organismsDiffer>false</organismsDiffer>
    <experiments>3</experiments>
</comment>
<comment type="interaction">
    <interactant intactId="EBI-719493">
        <id>P14373</id>
    </interactant>
    <interactant intactId="EBI-10176944">
        <id>E5KN55</id>
    </interactant>
    <organismsDiffer>false</organismsDiffer>
    <experiments>3</experiments>
</comment>
<comment type="interaction">
    <interactant intactId="EBI-719493">
        <id>P14373</id>
    </interactant>
    <interactant intactId="EBI-25475920">
        <id>PRO_0000449631</id>
        <label>rep</label>
        <dbReference type="UniProtKB" id="P0DTD1"/>
    </interactant>
    <organismsDiffer>true</organismsDiffer>
    <experiments>4</experiments>
</comment>
<comment type="interaction">
    <interactant intactId="EBI-719493">
        <id>P14373</id>
    </interactant>
    <interactant intactId="EBI-25492395">
        <id>PRO_0000449633</id>
        <label>rep</label>
        <dbReference type="UniProtKB" id="P0DTD1"/>
    </interactant>
    <organismsDiffer>true</organismsDiffer>
    <experiments>4</experiments>
</comment>
<comment type="subcellular location">
    <subcellularLocation>
        <location evidence="14">Nucleus</location>
    </subcellularLocation>
    <subcellularLocation>
        <location evidence="14 28">Cytoplasm</location>
    </subcellularLocation>
    <subcellularLocation>
        <location evidence="1">Nucleus</location>
        <location evidence="1">PML body</location>
    </subcellularLocation>
    <subcellularLocation>
        <location evidence="11 18 29">Early endosome</location>
    </subcellularLocation>
    <subcellularLocation>
        <location evidence="19">Mitochondrion</location>
    </subcellularLocation>
    <text evidence="1 18 28">Nuclear or cytoplasmic depending on the cell type (By similarity). Colocalized with PML and EIF3S6 in nuclear bodies. Recruited to retromer-containing endosomes via interaction with MAGEL2 (PubMed:23452853). Co-localizes with p62/SQSTM1 and TBK1 in cytoplasmic structures that are closely associated with the mitochondria (PubMed:36111389).</text>
</comment>
<comment type="alternative products">
    <event type="alternative splicing"/>
    <isoform>
        <id>P14373-1</id>
        <name>Alpha</name>
        <sequence type="displayed"/>
    </isoform>
    <isoform>
        <id>P14373-2</id>
        <name>Beta</name>
        <sequence type="described" ref="VSP_010896 VSP_010897"/>
    </isoform>
</comment>
<comment type="tissue specificity">
    <text evidence="8">Expressed in testis namely within the seminiferous tubules.</text>
</comment>
<comment type="induction">
    <text evidence="26">By type I interferons and upon hepatitis C viral infection.</text>
</comment>
<comment type="domain">
    <text>The coiled-coil region mediates interaction with EPC1 and CHD4. The B box and coiled-coil domains mediate interaction with PML. The B box and the distal coiled-coil domains mediate homomultimerisation. The B30.2 domain mediates interaction with EIF3S6.</text>
</comment>
<comment type="disease">
    <text evidence="9 25">A chromosomal aberration involving TRIM27/RFP is found in papillary thyroid carcinomas (PTCs). Translocation t(6;10)(p21.3;q11.2) with RET. The translocation generates TRIM27/RET and delta TRIM27/RET oncogenes.</text>
</comment>
<comment type="similarity">
    <text evidence="34">Belongs to the TRIM/RBCC family.</text>
</comment>
<proteinExistence type="evidence at protein level"/>
<feature type="chain" id="PRO_0000056240" description="Zinc finger protein RFP">
    <location>
        <begin position="1"/>
        <end position="513"/>
    </location>
</feature>
<feature type="domain" description="B30.2/SPRY" evidence="5">
    <location>
        <begin position="298"/>
        <end position="492"/>
    </location>
</feature>
<feature type="zinc finger region" description="RING-type" evidence="4">
    <location>
        <begin position="16"/>
        <end position="57"/>
    </location>
</feature>
<feature type="zinc finger region" description="B box-type" evidence="3">
    <location>
        <begin position="96"/>
        <end position="127"/>
    </location>
</feature>
<feature type="coiled-coil region" evidence="2">
    <location>
        <begin position="132"/>
        <end position="172"/>
    </location>
</feature>
<feature type="coiled-coil region" evidence="2">
    <location>
        <begin position="282"/>
        <end position="311"/>
    </location>
</feature>
<feature type="binding site" evidence="3">
    <location>
        <position position="96"/>
    </location>
    <ligand>
        <name>Zn(2+)</name>
        <dbReference type="ChEBI" id="CHEBI:29105"/>
    </ligand>
</feature>
<feature type="binding site" evidence="3">
    <location>
        <position position="99"/>
    </location>
    <ligand>
        <name>Zn(2+)</name>
        <dbReference type="ChEBI" id="CHEBI:29105"/>
    </ligand>
</feature>
<feature type="binding site" evidence="3">
    <location>
        <position position="118"/>
    </location>
    <ligand>
        <name>Zn(2+)</name>
        <dbReference type="ChEBI" id="CHEBI:29105"/>
    </ligand>
</feature>
<feature type="binding site" evidence="3">
    <location>
        <position position="124"/>
    </location>
    <ligand>
        <name>Zn(2+)</name>
        <dbReference type="ChEBI" id="CHEBI:29105"/>
    </ligand>
</feature>
<feature type="site" description="Breakpoint for translocation to form the TRIM27/RET oncogene">
    <location>
        <begin position="315"/>
        <end position="316"/>
    </location>
</feature>
<feature type="splice variant" id="VSP_010896" description="In isoform Beta." evidence="31">
    <original>FNLFP</original>
    <variation>SPSTT</variation>
    <location>
        <begin position="354"/>
        <end position="358"/>
    </location>
</feature>
<feature type="splice variant" id="VSP_010897" description="In isoform Beta." evidence="31">
    <location>
        <begin position="359"/>
        <end position="513"/>
    </location>
</feature>
<feature type="mutagenesis site" description="Abolished E3 ubiquitin-protein ligase activity; when associated with A-31." evidence="17">
    <original>C</original>
    <variation>A</variation>
    <location>
        <position position="16"/>
    </location>
</feature>
<feature type="mutagenesis site" description="Abolished E3 ubiquitin-protein ligase activity; when associated with A-16." evidence="17">
    <original>C</original>
    <variation>A</variation>
    <location>
        <position position="31"/>
    </location>
</feature>
<feature type="sequence conflict" description="In Ref. 5; AAH66924." evidence="34" ref="5">
    <original>E</original>
    <variation>K</variation>
    <location>
        <position position="446"/>
    </location>
</feature>
<name>TRI27_HUMAN</name>
<sequence length="513" mass="58490">MASGSVAECLQQETTCPVCLQYFAEPMMLDCGHNICCACLARCWGTAETNVSCPQCRETFPQRHMRPNRHLANVTQLVKQLRTERPSGPGGEMGVCEKHREPLKLYCEEDQMPICVVCDRSREHRGHSVLPLEEAVEGFKEQIQNQLDHLKRVKDLKKRRRAQGEQARAELLSLTQMEREKIVWEFEQLYHSLKEHEYRLLARLEELDLAIYNSINGAITQFSCNISHLSSLIAQLEEKQQQPTRELLQDIGDTLSRAERIRIPEPWITPPDLQEKIHIFAQKCLFLTESLKQFTEKMQSDMEKIQELREAQLYSVDVTLDPDTAYPSLILSDNLRQVRYSYLQQDLPDNPERFNLFPCVLGSPCFIAGRHYWEVEVGDKAKWTIGVCEDSVCRKGGVTSAPQNGFWAVSLWYGKEYWALTSPMTALPLRTPLQRVGIFLDYDAGEVSFYNVTERCHTFTFSHATFCGPVRPYFSLSYSGGKSAAPLIICPMSGIDGFSGHVGNHGHSMETSP</sequence>
<evidence type="ECO:0000250" key="1"/>
<evidence type="ECO:0000255" key="2"/>
<evidence type="ECO:0000255" key="3">
    <source>
        <dbReference type="PROSITE-ProRule" id="PRU00024"/>
    </source>
</evidence>
<evidence type="ECO:0000255" key="4">
    <source>
        <dbReference type="PROSITE-ProRule" id="PRU00175"/>
    </source>
</evidence>
<evidence type="ECO:0000255" key="5">
    <source>
        <dbReference type="PROSITE-ProRule" id="PRU00548"/>
    </source>
</evidence>
<evidence type="ECO:0000269" key="6">
    <source>
    </source>
</evidence>
<evidence type="ECO:0000269" key="7">
    <source>
    </source>
</evidence>
<evidence type="ECO:0000269" key="8">
    <source>
    </source>
</evidence>
<evidence type="ECO:0000269" key="9">
    <source>
    </source>
</evidence>
<evidence type="ECO:0000269" key="10">
    <source>
    </source>
</evidence>
<evidence type="ECO:0000269" key="11">
    <source>
    </source>
</evidence>
<evidence type="ECO:0000269" key="12">
    <source>
    </source>
</evidence>
<evidence type="ECO:0000269" key="13">
    <source>
    </source>
</evidence>
<evidence type="ECO:0000269" key="14">
    <source>
    </source>
</evidence>
<evidence type="ECO:0000269" key="15">
    <source>
    </source>
</evidence>
<evidence type="ECO:0000269" key="16">
    <source>
    </source>
</evidence>
<evidence type="ECO:0000269" key="17">
    <source>
    </source>
</evidence>
<evidence type="ECO:0000269" key="18">
    <source>
    </source>
</evidence>
<evidence type="ECO:0000269" key="19">
    <source>
    </source>
</evidence>
<evidence type="ECO:0000269" key="20">
    <source>
    </source>
</evidence>
<evidence type="ECO:0000269" key="21">
    <source>
    </source>
</evidence>
<evidence type="ECO:0000269" key="22">
    <source>
    </source>
</evidence>
<evidence type="ECO:0000269" key="23">
    <source>
    </source>
</evidence>
<evidence type="ECO:0000269" key="24">
    <source>
    </source>
</evidence>
<evidence type="ECO:0000269" key="25">
    <source>
    </source>
</evidence>
<evidence type="ECO:0000269" key="26">
    <source>
    </source>
</evidence>
<evidence type="ECO:0000269" key="27">
    <source>
    </source>
</evidence>
<evidence type="ECO:0000269" key="28">
    <source>
    </source>
</evidence>
<evidence type="ECO:0000269" key="29">
    <source>
    </source>
</evidence>
<evidence type="ECO:0000269" key="30">
    <source>
    </source>
</evidence>
<evidence type="ECO:0000303" key="31">
    <source>
    </source>
</evidence>
<evidence type="ECO:0000303" key="32">
    <source>
    </source>
</evidence>
<evidence type="ECO:0000303" key="33">
    <source>
    </source>
</evidence>
<evidence type="ECO:0000305" key="34"/>
<evidence type="ECO:0000312" key="35">
    <source>
        <dbReference type="HGNC" id="HGNC:9975"/>
    </source>
</evidence>
<accession>P14373</accession>
<accession>A2BE15</accession>
<accession>Q5RJA8</accession>
<accession>Q5ST26</accession>
<accession>Q6LA73</accession>
<accession>Q6NXR9</accession>
<accession>Q9BZY6</accession>
<accession>Q9UJL3</accession>
<protein>
    <recommendedName>
        <fullName>Zinc finger protein RFP</fullName>
        <ecNumber evidence="17 19 21 27">2.3.2.27</ecNumber>
    </recommendedName>
    <alternativeName>
        <fullName>RING finger protein 76</fullName>
    </alternativeName>
    <alternativeName>
        <fullName evidence="32">Ret finger protein</fullName>
    </alternativeName>
    <alternativeName>
        <fullName>Tripartite motif-containing protein 27</fullName>
    </alternativeName>
</protein>
<dbReference type="EC" id="2.3.2.27" evidence="17 19 21 27"/>
<dbReference type="EMBL" id="J03407">
    <property type="protein sequence ID" value="AAA36564.1"/>
    <property type="molecule type" value="mRNA"/>
</dbReference>
<dbReference type="EMBL" id="AF230393">
    <property type="protein sequence ID" value="AAG50172.1"/>
    <property type="molecule type" value="mRNA"/>
</dbReference>
<dbReference type="EMBL" id="AF230394">
    <property type="protein sequence ID" value="AAG50173.1"/>
    <property type="molecule type" value="mRNA"/>
</dbReference>
<dbReference type="EMBL" id="AL662859">
    <property type="status" value="NOT_ANNOTATED_CDS"/>
    <property type="molecule type" value="Genomic_DNA"/>
</dbReference>
<dbReference type="EMBL" id="AL662871">
    <property type="status" value="NOT_ANNOTATED_CDS"/>
    <property type="molecule type" value="Genomic_DNA"/>
</dbReference>
<dbReference type="EMBL" id="BX000360">
    <property type="status" value="NOT_ANNOTATED_CDS"/>
    <property type="molecule type" value="Genomic_DNA"/>
</dbReference>
<dbReference type="EMBL" id="BX537153">
    <property type="status" value="NOT_ANNOTATED_CDS"/>
    <property type="molecule type" value="Genomic_DNA"/>
</dbReference>
<dbReference type="EMBL" id="BX005144">
    <property type="status" value="NOT_ANNOTATED_CDS"/>
    <property type="molecule type" value="Genomic_DNA"/>
</dbReference>
<dbReference type="EMBL" id="BX119924">
    <property type="status" value="NOT_ANNOTATED_CDS"/>
    <property type="molecule type" value="Genomic_DNA"/>
</dbReference>
<dbReference type="EMBL" id="CR759942">
    <property type="status" value="NOT_ANNOTATED_CDS"/>
    <property type="molecule type" value="Genomic_DNA"/>
</dbReference>
<dbReference type="EMBL" id="Z84474">
    <property type="protein sequence ID" value="CAB06480.2"/>
    <property type="molecule type" value="Genomic_DNA"/>
</dbReference>
<dbReference type="EMBL" id="Z84476">
    <property type="protein sequence ID" value="CAB06480.2"/>
    <property type="status" value="JOINED"/>
    <property type="molecule type" value="Genomic_DNA"/>
</dbReference>
<dbReference type="EMBL" id="Z84476">
    <property type="protein sequence ID" value="CAI19959.1"/>
    <property type="molecule type" value="Genomic_DNA"/>
</dbReference>
<dbReference type="EMBL" id="Z84474">
    <property type="protein sequence ID" value="CAI19959.1"/>
    <property type="status" value="JOINED"/>
    <property type="molecule type" value="Genomic_DNA"/>
</dbReference>
<dbReference type="EMBL" id="CH471081">
    <property type="protein sequence ID" value="EAX03176.1"/>
    <property type="molecule type" value="Genomic_DNA"/>
</dbReference>
<dbReference type="EMBL" id="CH471081">
    <property type="protein sequence ID" value="EAX03177.1"/>
    <property type="molecule type" value="Genomic_DNA"/>
</dbReference>
<dbReference type="EMBL" id="BC013580">
    <property type="protein sequence ID" value="AAH13580.1"/>
    <property type="molecule type" value="mRNA"/>
</dbReference>
<dbReference type="EMBL" id="BC066924">
    <property type="protein sequence ID" value="AAH66924.1"/>
    <property type="molecule type" value="mRNA"/>
</dbReference>
<dbReference type="CCDS" id="CCDS4654.1">
    <molecule id="P14373-1"/>
</dbReference>
<dbReference type="PIR" id="A28101">
    <property type="entry name" value="TVHURF"/>
</dbReference>
<dbReference type="RefSeq" id="NP_006501.1">
    <molecule id="P14373-1"/>
    <property type="nucleotide sequence ID" value="NM_006510.5"/>
</dbReference>
<dbReference type="SMR" id="P14373"/>
<dbReference type="BioGRID" id="111919">
    <property type="interactions" value="548"/>
</dbReference>
<dbReference type="ComplexPortal" id="CPX-9461">
    <property type="entry name" value="USP7-TRIM27 ubiquitinase/deubiquitinase complex"/>
</dbReference>
<dbReference type="CORUM" id="P14373"/>
<dbReference type="FunCoup" id="P14373">
    <property type="interactions" value="3268"/>
</dbReference>
<dbReference type="IntAct" id="P14373">
    <property type="interactions" value="459"/>
</dbReference>
<dbReference type="MINT" id="P14373"/>
<dbReference type="STRING" id="9606.ENSP00000366404"/>
<dbReference type="MoonDB" id="P14373">
    <property type="type" value="Predicted"/>
</dbReference>
<dbReference type="GlyGen" id="P14373">
    <property type="glycosylation" value="1 site, 1 O-linked glycan (1 site)"/>
</dbReference>
<dbReference type="iPTMnet" id="P14373"/>
<dbReference type="MetOSite" id="P14373"/>
<dbReference type="PhosphoSitePlus" id="P14373"/>
<dbReference type="SwissPalm" id="P14373"/>
<dbReference type="BioMuta" id="TRIM27"/>
<dbReference type="DMDM" id="132517"/>
<dbReference type="jPOST" id="P14373"/>
<dbReference type="MassIVE" id="P14373"/>
<dbReference type="PaxDb" id="9606-ENSP00000366404"/>
<dbReference type="PeptideAtlas" id="P14373"/>
<dbReference type="ProteomicsDB" id="53047">
    <molecule id="P14373-1"/>
</dbReference>
<dbReference type="ProteomicsDB" id="53048">
    <molecule id="P14373-2"/>
</dbReference>
<dbReference type="Pumba" id="P14373"/>
<dbReference type="Antibodypedia" id="25916">
    <property type="antibodies" value="279 antibodies from 26 providers"/>
</dbReference>
<dbReference type="DNASU" id="5987"/>
<dbReference type="Ensembl" id="ENST00000377194.7">
    <molecule id="P14373-2"/>
    <property type="protein sequence ID" value="ENSP00000366399.3"/>
    <property type="gene ID" value="ENSG00000204713.11"/>
</dbReference>
<dbReference type="Ensembl" id="ENST00000377199.4">
    <molecule id="P14373-1"/>
    <property type="protein sequence ID" value="ENSP00000366404.3"/>
    <property type="gene ID" value="ENSG00000204713.11"/>
</dbReference>
<dbReference type="Ensembl" id="ENST00000400720.7">
    <molecule id="P14373-1"/>
    <property type="protein sequence ID" value="ENSP00000383555.3"/>
    <property type="gene ID" value="ENSG00000215641.8"/>
</dbReference>
<dbReference type="Ensembl" id="ENST00000412687.6">
    <molecule id="P14373-2"/>
    <property type="protein sequence ID" value="ENSP00000416281.2"/>
    <property type="gene ID" value="ENSG00000234495.7"/>
</dbReference>
<dbReference type="Ensembl" id="ENST00000417660.6">
    <molecule id="P14373-2"/>
    <property type="protein sequence ID" value="ENSP00000411026.2"/>
    <property type="gene ID" value="ENSG00000215641.8"/>
</dbReference>
<dbReference type="Ensembl" id="ENST00000427689.6">
    <molecule id="P14373-2"/>
    <property type="protein sequence ID" value="ENSP00000388622.2"/>
    <property type="gene ID" value="ENSG00000237071.7"/>
</dbReference>
<dbReference type="Ensembl" id="ENST00000431123.6">
    <molecule id="P14373-1"/>
    <property type="protein sequence ID" value="ENSP00000414793.2"/>
    <property type="gene ID" value="ENSG00000229006.7"/>
</dbReference>
<dbReference type="Ensembl" id="ENST00000435528.6">
    <molecule id="P14373-1"/>
    <property type="protein sequence ID" value="ENSP00000405229.2"/>
    <property type="gene ID" value="ENSG00000237071.7"/>
</dbReference>
<dbReference type="Ensembl" id="ENST00000437160.6">
    <molecule id="P14373-1"/>
    <property type="protein sequence ID" value="ENSP00000392787.2"/>
    <property type="gene ID" value="ENSG00000234495.7"/>
</dbReference>
<dbReference type="Ensembl" id="ENST00000452265.6">
    <molecule id="P14373-2"/>
    <property type="protein sequence ID" value="ENSP00000412445.2"/>
    <property type="gene ID" value="ENSG00000229006.7"/>
</dbReference>
<dbReference type="GeneID" id="5987"/>
<dbReference type="KEGG" id="hsa:5987"/>
<dbReference type="MANE-Select" id="ENST00000377199.4">
    <property type="protein sequence ID" value="ENSP00000366404.3"/>
    <property type="RefSeq nucleotide sequence ID" value="NM_006510.5"/>
    <property type="RefSeq protein sequence ID" value="NP_006501.1"/>
</dbReference>
<dbReference type="UCSC" id="uc003nlr.4">
    <molecule id="P14373-1"/>
    <property type="organism name" value="human"/>
</dbReference>
<dbReference type="AGR" id="HGNC:9975"/>
<dbReference type="CTD" id="5987"/>
<dbReference type="DisGeNET" id="5987"/>
<dbReference type="GeneCards" id="TRIM27"/>
<dbReference type="HGNC" id="HGNC:9975">
    <property type="gene designation" value="TRIM27"/>
</dbReference>
<dbReference type="HPA" id="ENSG00000204713">
    <property type="expression patterns" value="Low tissue specificity"/>
</dbReference>
<dbReference type="MalaCards" id="TRIM27"/>
<dbReference type="MIM" id="602165">
    <property type="type" value="gene"/>
</dbReference>
<dbReference type="neXtProt" id="NX_P14373"/>
<dbReference type="OpenTargets" id="ENSG00000204713"/>
<dbReference type="Orphanet" id="146">
    <property type="disease" value="Differentiated thyroid carcinoma"/>
</dbReference>
<dbReference type="PharmGKB" id="PA162406956"/>
<dbReference type="VEuPathDB" id="HostDB:ENSG00000204713"/>
<dbReference type="eggNOG" id="KOG2177">
    <property type="taxonomic scope" value="Eukaryota"/>
</dbReference>
<dbReference type="GeneTree" id="ENSGT00940000158537"/>
<dbReference type="HOGENOM" id="CLU_013137_6_1_1"/>
<dbReference type="InParanoid" id="P14373"/>
<dbReference type="OMA" id="NHAHSME"/>
<dbReference type="OrthoDB" id="9049620at2759"/>
<dbReference type="PAN-GO" id="P14373">
    <property type="GO annotations" value="15 GO annotations based on evolutionary models"/>
</dbReference>
<dbReference type="PhylomeDB" id="P14373"/>
<dbReference type="TreeFam" id="TF350411"/>
<dbReference type="PathwayCommons" id="P14373"/>
<dbReference type="Reactome" id="R-HSA-3232142">
    <property type="pathway name" value="SUMOylation of ubiquitinylation proteins"/>
</dbReference>
<dbReference type="Reactome" id="R-HSA-8948751">
    <property type="pathway name" value="Regulation of PTEN stability and activity"/>
</dbReference>
<dbReference type="Reactome" id="R-HSA-9635465">
    <property type="pathway name" value="Suppression of apoptosis"/>
</dbReference>
<dbReference type="SignaLink" id="P14373"/>
<dbReference type="SIGNOR" id="P14373"/>
<dbReference type="UniPathway" id="UPA00143"/>
<dbReference type="BioGRID-ORCS" id="5987">
    <property type="hits" value="17 hits in 1201 CRISPR screens"/>
</dbReference>
<dbReference type="ChiTaRS" id="TRIM27">
    <property type="organism name" value="human"/>
</dbReference>
<dbReference type="GeneWiki" id="TRIM27"/>
<dbReference type="GenomeRNAi" id="5987"/>
<dbReference type="Pharos" id="P14373">
    <property type="development level" value="Tbio"/>
</dbReference>
<dbReference type="PRO" id="PR:P14373"/>
<dbReference type="Proteomes" id="UP000005640">
    <property type="component" value="Chromosome 6"/>
</dbReference>
<dbReference type="RNAct" id="P14373">
    <property type="molecule type" value="protein"/>
</dbReference>
<dbReference type="Bgee" id="ENSG00000204713">
    <property type="expression patterns" value="Expressed in right uterine tube and 96 other cell types or tissues"/>
</dbReference>
<dbReference type="ExpressionAtlas" id="P14373">
    <property type="expression patterns" value="baseline and differential"/>
</dbReference>
<dbReference type="GO" id="GO:0005737">
    <property type="term" value="C:cytoplasm"/>
    <property type="evidence" value="ECO:0000314"/>
    <property type="project" value="UniProtKB"/>
</dbReference>
<dbReference type="GO" id="GO:0005829">
    <property type="term" value="C:cytosol"/>
    <property type="evidence" value="ECO:0000304"/>
    <property type="project" value="Reactome"/>
</dbReference>
<dbReference type="GO" id="GO:0005769">
    <property type="term" value="C:early endosome"/>
    <property type="evidence" value="ECO:0007669"/>
    <property type="project" value="UniProtKB-SubCell"/>
</dbReference>
<dbReference type="GO" id="GO:0005768">
    <property type="term" value="C:endosome"/>
    <property type="evidence" value="ECO:0000314"/>
    <property type="project" value="UniProtKB"/>
</dbReference>
<dbReference type="GO" id="GO:0001650">
    <property type="term" value="C:fibrillar center"/>
    <property type="evidence" value="ECO:0000314"/>
    <property type="project" value="HPA"/>
</dbReference>
<dbReference type="GO" id="GO:0005739">
    <property type="term" value="C:mitochondrion"/>
    <property type="evidence" value="ECO:0007669"/>
    <property type="project" value="UniProtKB-SubCell"/>
</dbReference>
<dbReference type="GO" id="GO:0031965">
    <property type="term" value="C:nuclear membrane"/>
    <property type="evidence" value="ECO:0000314"/>
    <property type="project" value="MGI"/>
</dbReference>
<dbReference type="GO" id="GO:0005730">
    <property type="term" value="C:nucleolus"/>
    <property type="evidence" value="ECO:0000314"/>
    <property type="project" value="HPA"/>
</dbReference>
<dbReference type="GO" id="GO:0005654">
    <property type="term" value="C:nucleoplasm"/>
    <property type="evidence" value="ECO:0000314"/>
    <property type="project" value="HPA"/>
</dbReference>
<dbReference type="GO" id="GO:0005634">
    <property type="term" value="C:nucleus"/>
    <property type="evidence" value="ECO:0000314"/>
    <property type="project" value="UniProtKB"/>
</dbReference>
<dbReference type="GO" id="GO:0016605">
    <property type="term" value="C:PML body"/>
    <property type="evidence" value="ECO:0007669"/>
    <property type="project" value="UniProtKB-SubCell"/>
</dbReference>
<dbReference type="GO" id="GO:0003677">
    <property type="term" value="F:DNA binding"/>
    <property type="evidence" value="ECO:0007669"/>
    <property type="project" value="UniProtKB-KW"/>
</dbReference>
<dbReference type="GO" id="GO:0042802">
    <property type="term" value="F:identical protein binding"/>
    <property type="evidence" value="ECO:0000353"/>
    <property type="project" value="UniProtKB"/>
</dbReference>
<dbReference type="GO" id="GO:0046872">
    <property type="term" value="F:metal ion binding"/>
    <property type="evidence" value="ECO:0000304"/>
    <property type="project" value="ProtInc"/>
</dbReference>
<dbReference type="GO" id="GO:0003676">
    <property type="term" value="F:nucleic acid binding"/>
    <property type="evidence" value="ECO:0000304"/>
    <property type="project" value="ProtInc"/>
</dbReference>
<dbReference type="GO" id="GO:0019789">
    <property type="term" value="F:SUMO transferase activity"/>
    <property type="evidence" value="ECO:0000269"/>
    <property type="project" value="Reactome"/>
</dbReference>
<dbReference type="GO" id="GO:0003713">
    <property type="term" value="F:transcription coactivator activity"/>
    <property type="evidence" value="ECO:0000314"/>
    <property type="project" value="ARUK-UCL"/>
</dbReference>
<dbReference type="GO" id="GO:0061630">
    <property type="term" value="F:ubiquitin protein ligase activity"/>
    <property type="evidence" value="ECO:0000314"/>
    <property type="project" value="UniProtKB"/>
</dbReference>
<dbReference type="GO" id="GO:0004842">
    <property type="term" value="F:ubiquitin-protein transferase activity"/>
    <property type="evidence" value="ECO:0000314"/>
    <property type="project" value="UniProtKB"/>
</dbReference>
<dbReference type="GO" id="GO:0008270">
    <property type="term" value="F:zinc ion binding"/>
    <property type="evidence" value="ECO:0007669"/>
    <property type="project" value="UniProtKB-KW"/>
</dbReference>
<dbReference type="GO" id="GO:0034314">
    <property type="term" value="P:Arp2/3 complex-mediated actin nucleation"/>
    <property type="evidence" value="ECO:0000314"/>
    <property type="project" value="UniProtKB"/>
</dbReference>
<dbReference type="GO" id="GO:0045087">
    <property type="term" value="P:innate immune response"/>
    <property type="evidence" value="ECO:0000314"/>
    <property type="project" value="UniProtKB"/>
</dbReference>
<dbReference type="GO" id="GO:0002820">
    <property type="term" value="P:negative regulation of adaptive immune response"/>
    <property type="evidence" value="ECO:0000315"/>
    <property type="project" value="UniProtKB"/>
</dbReference>
<dbReference type="GO" id="GO:0010507">
    <property type="term" value="P:negative regulation of autophagy"/>
    <property type="evidence" value="ECO:0000314"/>
    <property type="project" value="UniProt"/>
</dbReference>
<dbReference type="GO" id="GO:0090281">
    <property type="term" value="P:negative regulation of calcium ion import"/>
    <property type="evidence" value="ECO:0000315"/>
    <property type="project" value="UniProtKB"/>
</dbReference>
<dbReference type="GO" id="GO:0045814">
    <property type="term" value="P:negative regulation of gene expression, epigenetic"/>
    <property type="evidence" value="ECO:0000314"/>
    <property type="project" value="MGI"/>
</dbReference>
<dbReference type="GO" id="GO:0032703">
    <property type="term" value="P:negative regulation of interleukin-2 production"/>
    <property type="evidence" value="ECO:0000315"/>
    <property type="project" value="UniProtKB"/>
</dbReference>
<dbReference type="GO" id="GO:0006469">
    <property type="term" value="P:negative regulation of protein kinase activity"/>
    <property type="evidence" value="ECO:0000314"/>
    <property type="project" value="UniProtKB"/>
</dbReference>
<dbReference type="GO" id="GO:0000122">
    <property type="term" value="P:negative regulation of transcription by RNA polymerase II"/>
    <property type="evidence" value="ECO:0000314"/>
    <property type="project" value="MGI"/>
</dbReference>
<dbReference type="GO" id="GO:0032720">
    <property type="term" value="P:negative regulation of tumor necrosis factor production"/>
    <property type="evidence" value="ECO:0000315"/>
    <property type="project" value="UniProtKB"/>
</dbReference>
<dbReference type="GO" id="GO:0032480">
    <property type="term" value="P:negative regulation of type I interferon production"/>
    <property type="evidence" value="ECO:0000314"/>
    <property type="project" value="UniProt"/>
</dbReference>
<dbReference type="GO" id="GO:0032897">
    <property type="term" value="P:negative regulation of viral transcription"/>
    <property type="evidence" value="ECO:0000314"/>
    <property type="project" value="UniProtKB"/>
</dbReference>
<dbReference type="GO" id="GO:0051127">
    <property type="term" value="P:positive regulation of actin nucleation"/>
    <property type="evidence" value="ECO:0007669"/>
    <property type="project" value="Ensembl"/>
</dbReference>
<dbReference type="GO" id="GO:0051091">
    <property type="term" value="P:positive regulation of DNA-binding transcription factor activity"/>
    <property type="evidence" value="ECO:0000314"/>
    <property type="project" value="UniProtKB"/>
</dbReference>
<dbReference type="GO" id="GO:0032729">
    <property type="term" value="P:positive regulation of type II interferon production"/>
    <property type="evidence" value="ECO:0000315"/>
    <property type="project" value="UniProtKB"/>
</dbReference>
<dbReference type="GO" id="GO:0070534">
    <property type="term" value="P:protein K63-linked ubiquitination"/>
    <property type="evidence" value="ECO:0000315"/>
    <property type="project" value="UniProtKB"/>
</dbReference>
<dbReference type="GO" id="GO:0016925">
    <property type="term" value="P:protein sumoylation"/>
    <property type="evidence" value="ECO:0000304"/>
    <property type="project" value="Reactome"/>
</dbReference>
<dbReference type="GO" id="GO:0042147">
    <property type="term" value="P:retrograde transport, endosome to Golgi"/>
    <property type="evidence" value="ECO:0000314"/>
    <property type="project" value="UniProtKB"/>
</dbReference>
<dbReference type="GO" id="GO:0007283">
    <property type="term" value="P:spermatogenesis"/>
    <property type="evidence" value="ECO:0000304"/>
    <property type="project" value="ProtInc"/>
</dbReference>
<dbReference type="GO" id="GO:0044790">
    <property type="term" value="P:suppression of viral release by host"/>
    <property type="evidence" value="ECO:0007669"/>
    <property type="project" value="Ensembl"/>
</dbReference>
<dbReference type="CDD" id="cd19762">
    <property type="entry name" value="Bbox2_TRIM7-like"/>
    <property type="match status" value="1"/>
</dbReference>
<dbReference type="CDD" id="cd16594">
    <property type="entry name" value="RING-HC_TRIM7-like_C-IV"/>
    <property type="match status" value="1"/>
</dbReference>
<dbReference type="CDD" id="cd15814">
    <property type="entry name" value="SPRY_PRY_TRIM27"/>
    <property type="match status" value="1"/>
</dbReference>
<dbReference type="FunFam" id="2.60.120.920:FF:000004">
    <property type="entry name" value="Butyrophilin subfamily 1 member A1"/>
    <property type="match status" value="1"/>
</dbReference>
<dbReference type="FunFam" id="3.30.160.60:FF:000858">
    <property type="entry name" value="Zinc finger protein RFP"/>
    <property type="match status" value="1"/>
</dbReference>
<dbReference type="FunFam" id="3.30.40.10:FF:000257">
    <property type="entry name" value="zinc finger protein RFP"/>
    <property type="match status" value="1"/>
</dbReference>
<dbReference type="Gene3D" id="2.60.120.920">
    <property type="match status" value="1"/>
</dbReference>
<dbReference type="Gene3D" id="3.30.160.60">
    <property type="entry name" value="Classic Zinc Finger"/>
    <property type="match status" value="1"/>
</dbReference>
<dbReference type="Gene3D" id="3.30.40.10">
    <property type="entry name" value="Zinc/RING finger domain, C3HC4 (zinc finger)"/>
    <property type="match status" value="1"/>
</dbReference>
<dbReference type="InterPro" id="IPR001870">
    <property type="entry name" value="B30.2/SPRY"/>
</dbReference>
<dbReference type="InterPro" id="IPR043136">
    <property type="entry name" value="B30.2/SPRY_sf"/>
</dbReference>
<dbReference type="InterPro" id="IPR003879">
    <property type="entry name" value="Butyrophylin_SPRY"/>
</dbReference>
<dbReference type="InterPro" id="IPR013320">
    <property type="entry name" value="ConA-like_dom_sf"/>
</dbReference>
<dbReference type="InterPro" id="IPR006574">
    <property type="entry name" value="PRY"/>
</dbReference>
<dbReference type="InterPro" id="IPR035791">
    <property type="entry name" value="SPRY/PRY_TRIM27"/>
</dbReference>
<dbReference type="InterPro" id="IPR003877">
    <property type="entry name" value="SPRY_dom"/>
</dbReference>
<dbReference type="InterPro" id="IPR050143">
    <property type="entry name" value="TRIM/RBCC"/>
</dbReference>
<dbReference type="InterPro" id="IPR000315">
    <property type="entry name" value="Znf_B-box"/>
</dbReference>
<dbReference type="InterPro" id="IPR020457">
    <property type="entry name" value="Znf_B-box_chordata"/>
</dbReference>
<dbReference type="InterPro" id="IPR001841">
    <property type="entry name" value="Znf_RING"/>
</dbReference>
<dbReference type="InterPro" id="IPR013083">
    <property type="entry name" value="Znf_RING/FYVE/PHD"/>
</dbReference>
<dbReference type="InterPro" id="IPR017907">
    <property type="entry name" value="Znf_RING_CS"/>
</dbReference>
<dbReference type="PANTHER" id="PTHR24103">
    <property type="entry name" value="E3 UBIQUITIN-PROTEIN LIGASE TRIM"/>
    <property type="match status" value="1"/>
</dbReference>
<dbReference type="Pfam" id="PF13765">
    <property type="entry name" value="PRY"/>
    <property type="match status" value="1"/>
</dbReference>
<dbReference type="Pfam" id="PF00622">
    <property type="entry name" value="SPRY"/>
    <property type="match status" value="1"/>
</dbReference>
<dbReference type="Pfam" id="PF00643">
    <property type="entry name" value="zf-B_box"/>
    <property type="match status" value="1"/>
</dbReference>
<dbReference type="Pfam" id="PF15227">
    <property type="entry name" value="zf-C3HC4_4"/>
    <property type="match status" value="1"/>
</dbReference>
<dbReference type="PRINTS" id="PR01406">
    <property type="entry name" value="BBOXZNFINGER"/>
</dbReference>
<dbReference type="PRINTS" id="PR01407">
    <property type="entry name" value="BUTYPHLNCDUF"/>
</dbReference>
<dbReference type="SMART" id="SM00336">
    <property type="entry name" value="BBOX"/>
    <property type="match status" value="1"/>
</dbReference>
<dbReference type="SMART" id="SM00589">
    <property type="entry name" value="PRY"/>
    <property type="match status" value="1"/>
</dbReference>
<dbReference type="SMART" id="SM00184">
    <property type="entry name" value="RING"/>
    <property type="match status" value="1"/>
</dbReference>
<dbReference type="SMART" id="SM00449">
    <property type="entry name" value="SPRY"/>
    <property type="match status" value="1"/>
</dbReference>
<dbReference type="SUPFAM" id="SSF57845">
    <property type="entry name" value="B-box zinc-binding domain"/>
    <property type="match status" value="1"/>
</dbReference>
<dbReference type="SUPFAM" id="SSF49899">
    <property type="entry name" value="Concanavalin A-like lectins/glucanases"/>
    <property type="match status" value="1"/>
</dbReference>
<dbReference type="SUPFAM" id="SSF57850">
    <property type="entry name" value="RING/U-box"/>
    <property type="match status" value="1"/>
</dbReference>
<dbReference type="PROSITE" id="PS50188">
    <property type="entry name" value="B302_SPRY"/>
    <property type="match status" value="1"/>
</dbReference>
<dbReference type="PROSITE" id="PS50119">
    <property type="entry name" value="ZF_BBOX"/>
    <property type="match status" value="1"/>
</dbReference>
<dbReference type="PROSITE" id="PS00518">
    <property type="entry name" value="ZF_RING_1"/>
    <property type="match status" value="1"/>
</dbReference>
<dbReference type="PROSITE" id="PS50089">
    <property type="entry name" value="ZF_RING_2"/>
    <property type="match status" value="1"/>
</dbReference>
<reference key="1">
    <citation type="journal article" date="1988" name="Mol. Cell. Biol.">
        <title>Developmentally regulated expression of a human 'finger'-containing gene encoded by the 5' half of the ret transforming gene.</title>
        <authorList>
            <person name="Takahashi M."/>
            <person name="Inaguma Y."/>
            <person name="Hiai H."/>
            <person name="Hirose F."/>
        </authorList>
    </citation>
    <scope>NUCLEOTIDE SEQUENCE [MRNA] (ISOFORM ALPHA)</scope>
</reference>
<reference key="2">
    <citation type="journal article" date="2001" name="EMBO J.">
        <title>The tripartite motif family identifies cell compartments.</title>
        <authorList>
            <person name="Reymond A."/>
            <person name="Meroni G."/>
            <person name="Fantozzi A."/>
            <person name="Merla G."/>
            <person name="Cairo S."/>
            <person name="Luzi L."/>
            <person name="Riganelli D."/>
            <person name="Zanaria E."/>
            <person name="Messali S."/>
            <person name="Cainarca S."/>
            <person name="Guffanti A."/>
            <person name="Minucci S."/>
            <person name="Pelicci P.G."/>
            <person name="Ballabio A."/>
        </authorList>
    </citation>
    <scope>NUCLEOTIDE SEQUENCE [MRNA] (ISOFORMS ALPHA AND BETA)</scope>
</reference>
<reference key="3">
    <citation type="journal article" date="2003" name="Nature">
        <title>The DNA sequence and analysis of human chromosome 6.</title>
        <authorList>
            <person name="Mungall A.J."/>
            <person name="Palmer S.A."/>
            <person name="Sims S.K."/>
            <person name="Edwards C.A."/>
            <person name="Ashurst J.L."/>
            <person name="Wilming L."/>
            <person name="Jones M.C."/>
            <person name="Horton R."/>
            <person name="Hunt S.E."/>
            <person name="Scott C.E."/>
            <person name="Gilbert J.G.R."/>
            <person name="Clamp M.E."/>
            <person name="Bethel G."/>
            <person name="Milne S."/>
            <person name="Ainscough R."/>
            <person name="Almeida J.P."/>
            <person name="Ambrose K.D."/>
            <person name="Andrews T.D."/>
            <person name="Ashwell R.I.S."/>
            <person name="Babbage A.K."/>
            <person name="Bagguley C.L."/>
            <person name="Bailey J."/>
            <person name="Banerjee R."/>
            <person name="Barker D.J."/>
            <person name="Barlow K.F."/>
            <person name="Bates K."/>
            <person name="Beare D.M."/>
            <person name="Beasley H."/>
            <person name="Beasley O."/>
            <person name="Bird C.P."/>
            <person name="Blakey S.E."/>
            <person name="Bray-Allen S."/>
            <person name="Brook J."/>
            <person name="Brown A.J."/>
            <person name="Brown J.Y."/>
            <person name="Burford D.C."/>
            <person name="Burrill W."/>
            <person name="Burton J."/>
            <person name="Carder C."/>
            <person name="Carter N.P."/>
            <person name="Chapman J.C."/>
            <person name="Clark S.Y."/>
            <person name="Clark G."/>
            <person name="Clee C.M."/>
            <person name="Clegg S."/>
            <person name="Cobley V."/>
            <person name="Collier R.E."/>
            <person name="Collins J.E."/>
            <person name="Colman L.K."/>
            <person name="Corby N.R."/>
            <person name="Coville G.J."/>
            <person name="Culley K.M."/>
            <person name="Dhami P."/>
            <person name="Davies J."/>
            <person name="Dunn M."/>
            <person name="Earthrowl M.E."/>
            <person name="Ellington A.E."/>
            <person name="Evans K.A."/>
            <person name="Faulkner L."/>
            <person name="Francis M.D."/>
            <person name="Frankish A."/>
            <person name="Frankland J."/>
            <person name="French L."/>
            <person name="Garner P."/>
            <person name="Garnett J."/>
            <person name="Ghori M.J."/>
            <person name="Gilby L.M."/>
            <person name="Gillson C.J."/>
            <person name="Glithero R.J."/>
            <person name="Grafham D.V."/>
            <person name="Grant M."/>
            <person name="Gribble S."/>
            <person name="Griffiths C."/>
            <person name="Griffiths M.N.D."/>
            <person name="Hall R."/>
            <person name="Halls K.S."/>
            <person name="Hammond S."/>
            <person name="Harley J.L."/>
            <person name="Hart E.A."/>
            <person name="Heath P.D."/>
            <person name="Heathcott R."/>
            <person name="Holmes S.J."/>
            <person name="Howden P.J."/>
            <person name="Howe K.L."/>
            <person name="Howell G.R."/>
            <person name="Huckle E."/>
            <person name="Humphray S.J."/>
            <person name="Humphries M.D."/>
            <person name="Hunt A.R."/>
            <person name="Johnson C.M."/>
            <person name="Joy A.A."/>
            <person name="Kay M."/>
            <person name="Keenan S.J."/>
            <person name="Kimberley A.M."/>
            <person name="King A."/>
            <person name="Laird G.K."/>
            <person name="Langford C."/>
            <person name="Lawlor S."/>
            <person name="Leongamornlert D.A."/>
            <person name="Leversha M."/>
            <person name="Lloyd C.R."/>
            <person name="Lloyd D.M."/>
            <person name="Loveland J.E."/>
            <person name="Lovell J."/>
            <person name="Martin S."/>
            <person name="Mashreghi-Mohammadi M."/>
            <person name="Maslen G.L."/>
            <person name="Matthews L."/>
            <person name="McCann O.T."/>
            <person name="McLaren S.J."/>
            <person name="McLay K."/>
            <person name="McMurray A."/>
            <person name="Moore M.J.F."/>
            <person name="Mullikin J.C."/>
            <person name="Niblett D."/>
            <person name="Nickerson T."/>
            <person name="Novik K.L."/>
            <person name="Oliver K."/>
            <person name="Overton-Larty E.K."/>
            <person name="Parker A."/>
            <person name="Patel R."/>
            <person name="Pearce A.V."/>
            <person name="Peck A.I."/>
            <person name="Phillimore B.J.C.T."/>
            <person name="Phillips S."/>
            <person name="Plumb R.W."/>
            <person name="Porter K.M."/>
            <person name="Ramsey Y."/>
            <person name="Ranby S.A."/>
            <person name="Rice C.M."/>
            <person name="Ross M.T."/>
            <person name="Searle S.M."/>
            <person name="Sehra H.K."/>
            <person name="Sheridan E."/>
            <person name="Skuce C.D."/>
            <person name="Smith S."/>
            <person name="Smith M."/>
            <person name="Spraggon L."/>
            <person name="Squares S.L."/>
            <person name="Steward C.A."/>
            <person name="Sycamore N."/>
            <person name="Tamlyn-Hall G."/>
            <person name="Tester J."/>
            <person name="Theaker A.J."/>
            <person name="Thomas D.W."/>
            <person name="Thorpe A."/>
            <person name="Tracey A."/>
            <person name="Tromans A."/>
            <person name="Tubby B."/>
            <person name="Wall M."/>
            <person name="Wallis J.M."/>
            <person name="West A.P."/>
            <person name="White S.S."/>
            <person name="Whitehead S.L."/>
            <person name="Whittaker H."/>
            <person name="Wild A."/>
            <person name="Willey D.J."/>
            <person name="Wilmer T.E."/>
            <person name="Wood J.M."/>
            <person name="Wray P.W."/>
            <person name="Wyatt J.C."/>
            <person name="Young L."/>
            <person name="Younger R.M."/>
            <person name="Bentley D.R."/>
            <person name="Coulson A."/>
            <person name="Durbin R.M."/>
            <person name="Hubbard T."/>
            <person name="Sulston J.E."/>
            <person name="Dunham I."/>
            <person name="Rogers J."/>
            <person name="Beck S."/>
        </authorList>
    </citation>
    <scope>NUCLEOTIDE SEQUENCE [LARGE SCALE GENOMIC DNA]</scope>
</reference>
<reference key="4">
    <citation type="submission" date="2005-07" db="EMBL/GenBank/DDBJ databases">
        <authorList>
            <person name="Mural R.J."/>
            <person name="Istrail S."/>
            <person name="Sutton G.G."/>
            <person name="Florea L."/>
            <person name="Halpern A.L."/>
            <person name="Mobarry C.M."/>
            <person name="Lippert R."/>
            <person name="Walenz B."/>
            <person name="Shatkay H."/>
            <person name="Dew I."/>
            <person name="Miller J.R."/>
            <person name="Flanigan M.J."/>
            <person name="Edwards N.J."/>
            <person name="Bolanos R."/>
            <person name="Fasulo D."/>
            <person name="Halldorsson B.V."/>
            <person name="Hannenhalli S."/>
            <person name="Turner R."/>
            <person name="Yooseph S."/>
            <person name="Lu F."/>
            <person name="Nusskern D.R."/>
            <person name="Shue B.C."/>
            <person name="Zheng X.H."/>
            <person name="Zhong F."/>
            <person name="Delcher A.L."/>
            <person name="Huson D.H."/>
            <person name="Kravitz S.A."/>
            <person name="Mouchard L."/>
            <person name="Reinert K."/>
            <person name="Remington K.A."/>
            <person name="Clark A.G."/>
            <person name="Waterman M.S."/>
            <person name="Eichler E.E."/>
            <person name="Adams M.D."/>
            <person name="Hunkapiller M.W."/>
            <person name="Myers E.W."/>
            <person name="Venter J.C."/>
        </authorList>
    </citation>
    <scope>NUCLEOTIDE SEQUENCE [LARGE SCALE GENOMIC DNA]</scope>
</reference>
<reference key="5">
    <citation type="journal article" date="2004" name="Genome Res.">
        <title>The status, quality, and expansion of the NIH full-length cDNA project: the Mammalian Gene Collection (MGC).</title>
        <authorList>
            <consortium name="The MGC Project Team"/>
        </authorList>
    </citation>
    <scope>NUCLEOTIDE SEQUENCE [LARGE SCALE MRNA] (ISOFORM ALPHA)</scope>
    <source>
        <tissue>Testis</tissue>
        <tissue>Uterus</tissue>
    </source>
</reference>
<reference key="6">
    <citation type="journal article" date="1987" name="Mol. Cell. Biol.">
        <title>ret transforming gene encodes a fusion protein homologous to tyrosine kinases.</title>
        <authorList>
            <person name="Takahashi M."/>
            <person name="Cooper G.M."/>
        </authorList>
    </citation>
    <scope>CHROMOSOMAL TRANSLOCATION WITH RET</scope>
</reference>
<reference key="7">
    <citation type="journal article" date="1992" name="Nucleic Acids Res.">
        <title>RFP is a DNA binding protein associated with the nuclear matrix.</title>
        <authorList>
            <person name="Isomura T."/>
            <person name="Tamiya-Koizumi K."/>
            <person name="Suzuki M."/>
            <person name="Yoshida S."/>
            <person name="Taniguchi M."/>
            <person name="Matsuyama M."/>
            <person name="Ishigaki T."/>
            <person name="Sakuma S."/>
            <person name="Takahashi M."/>
        </authorList>
    </citation>
    <scope>SUBCELLULAR LOCATION</scope>
</reference>
<reference key="8">
    <citation type="journal article" date="1997" name="J. Cell Sci.">
        <title>Involvement of the rfp tripartite motif in protein-protein interactions and subcellular distribution.</title>
        <authorList>
            <person name="Cao T."/>
            <person name="Borden K.L."/>
            <person name="Freemont P.S."/>
            <person name="Etkin L.D."/>
        </authorList>
    </citation>
    <scope>SUBCELLULAR LOCATION</scope>
</reference>
<reference key="9">
    <citation type="journal article" date="1998" name="J. Cell Sci.">
        <title>Ret finger protein is a normal component of PML nuclear bodies and interacts directly with PML.</title>
        <authorList>
            <person name="Cao T."/>
            <person name="Duprez E."/>
            <person name="Borden K.L."/>
            <person name="Freemont P.S."/>
            <person name="Etkin L.D."/>
        </authorList>
    </citation>
    <scope>INTERACTION WITH PML</scope>
</reference>
<reference key="10">
    <citation type="journal article" date="1999" name="J. Cell Sci.">
        <title>Interaction between the Ret finger protein and the Int-6 gene product and co-localisation into nuclear bodies.</title>
        <authorList>
            <person name="Morris-Desbois C."/>
            <person name="Bochard V."/>
            <person name="Reynaud C."/>
            <person name="Jalinot P."/>
        </authorList>
    </citation>
    <scope>INTERACTION WITH EIF3S6</scope>
</reference>
<reference key="11">
    <citation type="journal article" date="2000" name="J. Biol. Chem.">
        <title>RET finger protein is a transcriptional repressor and interacts with enhancer of polycomb that has dual transcriptional functions.</title>
        <authorList>
            <person name="Shimono Y."/>
            <person name="Murakami H."/>
            <person name="Hasegawa Y."/>
            <person name="Takahashi M."/>
        </authorList>
    </citation>
    <scope>INTERACTION WITH EPC1</scope>
    <scope>FUNCTION</scope>
</reference>
<reference key="12">
    <citation type="journal article" date="2002" name="Pathol. Int.">
        <title>Differential expression of RET finger protein in testicular germ cell tumors.</title>
        <authorList>
            <person name="Tezel G."/>
            <person name="Nagasaka T."/>
            <person name="Shimono Y."/>
            <person name="Takahashi M."/>
        </authorList>
    </citation>
    <scope>TISSUE SPECIFICITY</scope>
</reference>
<reference key="13">
    <citation type="journal article" date="2003" name="J. Biol. Chem.">
        <title>The Ret finger protein induces apoptosis via its RING finger-B box-coiled-coil motif.</title>
        <authorList>
            <person name="Dho S.H."/>
            <person name="Kwon K.S."/>
        </authorList>
    </citation>
    <scope>FUNCTION</scope>
</reference>
<reference key="14">
    <citation type="journal article" date="2003" name="J. Biol. Chem.">
        <title>Mi-2 beta associates with BRG1 and RET finger protein at the distinct regions with transcriptional activating and repressing abilities.</title>
        <authorList>
            <person name="Shimono Y."/>
            <person name="Murakami H."/>
            <person name="Kawai K."/>
            <person name="Wade P.A."/>
            <person name="Shimokata K."/>
            <person name="Takahashi M."/>
        </authorList>
    </citation>
    <scope>INTERACTION WITH CHD4</scope>
</reference>
<reference key="15">
    <citation type="journal article" date="2003" name="Mutat. Res.">
        <title>Novel tumorigenic rearrangement, Delta rfp/ret, in a papillary thyroid carcinoma from externally irradiated patient.</title>
        <authorList>
            <person name="Saenko V."/>
            <person name="Rogounovitch T."/>
            <person name="Shimizu-Yoshida Y."/>
            <person name="Abrosimov A."/>
            <person name="Lushnikov E."/>
            <person name="Roumiantsev P."/>
            <person name="Matsumoto N."/>
            <person name="Nakashima M."/>
            <person name="Meirmanov S."/>
            <person name="Ohtsuru A."/>
            <person name="Namba H."/>
            <person name="Tsyb A."/>
            <person name="Yamashita S."/>
        </authorList>
    </citation>
    <scope>CHROMOSOMAL TRANSLOCATION WITH RET</scope>
</reference>
<reference key="16">
    <citation type="journal article" date="2005" name="Mol. Cell">
        <title>Selective ablation of retinoblastoma protein function by the RET finger protein.</title>
        <authorList>
            <person name="Krutzfeldt M."/>
            <person name="Ellis M."/>
            <person name="Weekes D.B."/>
            <person name="Bull J.J."/>
            <person name="Eilers M."/>
            <person name="Vivanco M.D."/>
            <person name="Sellers W.R."/>
            <person name="Mittnacht S."/>
        </authorList>
    </citation>
    <scope>INTERACTION WITH EID1</scope>
</reference>
<reference key="17">
    <citation type="journal article" date="2007" name="Virology">
        <title>Unique features of TRIM5alpha among closely related human TRIM family members.</title>
        <authorList>
            <person name="Li X."/>
            <person name="Gold B."/>
            <person name="O'hUigin C."/>
            <person name="Diaz-Griffero F."/>
            <person name="Song B."/>
            <person name="Si Z."/>
            <person name="Li Y."/>
            <person name="Yuan W."/>
            <person name="Stremlau M."/>
            <person name="Mische C."/>
            <person name="Javanbakht H."/>
            <person name="Scally M."/>
            <person name="Winkler C."/>
            <person name="Dean M."/>
            <person name="Sodroski J."/>
        </authorList>
    </citation>
    <scope>SUBUNIT</scope>
    <scope>SUBCELLULAR LOCATION</scope>
</reference>
<reference key="18">
    <citation type="journal article" date="2010" name="Mol. Cell">
        <title>MAGE-RING protein complexes comprise a family of E3 ubiquitin ligases.</title>
        <authorList>
            <person name="Doyle J.M."/>
            <person name="Gao J."/>
            <person name="Wang J."/>
            <person name="Yang M."/>
            <person name="Potts P.R."/>
        </authorList>
    </citation>
    <scope>INTERACTION WITH MAGED4; MAGEF1 AND MAGEL2</scope>
</reference>
<reference key="19">
    <citation type="journal article" date="2010" name="Sci. Signal.">
        <title>Quantitative phosphoproteomics reveals widespread full phosphorylation site occupancy during mitosis.</title>
        <authorList>
            <person name="Olsen J.V."/>
            <person name="Vermeulen M."/>
            <person name="Santamaria A."/>
            <person name="Kumar C."/>
            <person name="Miller M.L."/>
            <person name="Jensen L.J."/>
            <person name="Gnad F."/>
            <person name="Cox J."/>
            <person name="Jensen T.S."/>
            <person name="Nigg E.A."/>
            <person name="Brunak S."/>
            <person name="Mann M."/>
        </authorList>
    </citation>
    <scope>IDENTIFICATION BY MASS SPECTROMETRY [LARGE SCALE ANALYSIS]</scope>
    <source>
        <tissue>Cervix carcinoma</tissue>
    </source>
</reference>
<reference key="20">
    <citation type="journal article" date="2011" name="Proc. Natl. Acad. Sci. U.S.A.">
        <title>Tripartite motif containing protein 27 negatively regulates CD4 T cells by ubiquitinating and inhibiting the class II PI3K-C2beta.</title>
        <authorList>
            <person name="Cai X."/>
            <person name="Srivastava S."/>
            <person name="Sun Y."/>
            <person name="Li Z."/>
            <person name="Wu H."/>
            <person name="Zuvela-Jelaska L."/>
            <person name="Li J."/>
            <person name="Salamon R.S."/>
            <person name="Backer J.M."/>
            <person name="Skolnik E.Y."/>
        </authorList>
    </citation>
    <scope>FUNCTION AS UBIQUITIN LIGASE</scope>
    <scope>PATHWAY</scope>
    <scope>INTERACTION WITH PIK3C2B</scope>
</reference>
<reference key="21">
    <citation type="journal article" date="2012" name="PLoS ONE">
        <title>TRIM27 negatively regulates NOD2 by ubiquitination and proteasomal degradation.</title>
        <authorList>
            <person name="Zurek B."/>
            <person name="Schoultz I."/>
            <person name="Neerincx A."/>
            <person name="Napolitano L.M."/>
            <person name="Birkner K."/>
            <person name="Bennek E."/>
            <person name="Sellge G."/>
            <person name="Lerm M."/>
            <person name="Meroni G."/>
            <person name="Soederholm J.D."/>
            <person name="Kufer T.A."/>
        </authorList>
    </citation>
    <scope>FUNCTION</scope>
    <scope>CATALYTIC ACTIVITY</scope>
    <scope>PATHWAY</scope>
    <scope>MUTAGENESIS OF CYS-16 AND CYS-31</scope>
</reference>
<reference key="22">
    <citation type="journal article" date="2013" name="Cell">
        <title>Regulation of WASH-dependent actin polymerization and protein trafficking by ubiquitination.</title>
        <authorList>
            <person name="Hao Y.H."/>
            <person name="Doyle J.M."/>
            <person name="Ramanathan S."/>
            <person name="Gomez T.S."/>
            <person name="Jia D."/>
            <person name="Xu M."/>
            <person name="Chen Z.J."/>
            <person name="Billadeau D.D."/>
            <person name="Rosen M.K."/>
            <person name="Potts P.R."/>
        </authorList>
    </citation>
    <scope>FUNCTION</scope>
    <scope>INTERACTION WITH MAGEL2</scope>
    <scope>SUBCELLULAR LOCATION</scope>
</reference>
<reference key="23">
    <citation type="journal article" date="2013" name="Mol. Cell. Biol.">
        <title>Ubiquitination-deubiquitination by the TRIM27-USP7 complex regulates tumor necrosis factor alpha-induced apoptosis.</title>
        <authorList>
            <person name="Zaman M.M."/>
            <person name="Nomura T."/>
            <person name="Takagi T."/>
            <person name="Okamura T."/>
            <person name="Jin W."/>
            <person name="Shinagawa T."/>
            <person name="Tanaka Y."/>
            <person name="Ishii S."/>
        </authorList>
    </citation>
    <scope>FUNCTION</scope>
    <scope>SUBCELLULAR LOCATION</scope>
    <scope>CATALYTIC ACTIVITY</scope>
</reference>
<reference key="24">
    <citation type="journal article" date="2015" name="J. Virol.">
        <title>Identification of TRIM27 as a novel degradation target of Herpes Simplex Virus 1 ICP0.</title>
        <authorList>
            <person name="Conwell S.E."/>
            <person name="White A.E."/>
            <person name="Harper J.W."/>
            <person name="Knipe D.M."/>
        </authorList>
    </citation>
    <scope>INTERACTION WITH HERPES SIMPLEX VIRUS ICP0 (MICROBIAL INFECTION)</scope>
</reference>
<reference key="25">
    <citation type="journal article" date="2015" name="Mol. Cell">
        <title>USP7 Acts as a Molecular Rheostat to Promote WASH-Dependent Endosomal Protein Recycling and Is Mutated in a Human Neurodevelopmental Disorder.</title>
        <authorList>
            <person name="Hao Y.H."/>
            <person name="Fountain M.D. Jr."/>
            <person name="Fon Tacer K."/>
            <person name="Xia F."/>
            <person name="Bi W."/>
            <person name="Kang S.H."/>
            <person name="Patel A."/>
            <person name="Rosenfeld J.A."/>
            <person name="Le Caignec C."/>
            <person name="Isidor B."/>
            <person name="Krantz I.D."/>
            <person name="Noon S.E."/>
            <person name="Pfotenhauer J.P."/>
            <person name="Morgan T.M."/>
            <person name="Moran R."/>
            <person name="Pedersen R.C."/>
            <person name="Saenz M.S."/>
            <person name="Schaaf C.P."/>
            <person name="Potts P.R."/>
        </authorList>
    </citation>
    <scope>INTERACTION WITH USP7 AND MAGEL2</scope>
</reference>
<reference key="26">
    <citation type="journal article" date="2015" name="Cell Res.">
        <title>Siglec1 suppresses antiviral innate immune response by inducing TBK1 degradation via the ubiquitin ligase TRIM27.</title>
        <authorList>
            <person name="Zheng Q."/>
            <person name="Hou J."/>
            <person name="Zhou Y."/>
            <person name="Yang Y."/>
            <person name="Xie B."/>
            <person name="Cao X."/>
        </authorList>
    </citation>
    <scope>FUNCTION</scope>
    <scope>INTERACTION WITH PTPN11</scope>
    <scope>CATALYTIC ACTIVITY</scope>
    <scope>PATHWAY</scope>
</reference>
<reference key="27">
    <citation type="journal article" date="2016" name="Sci. Rep.">
        <title>The ubiquitin ligase TRIM27 functions as a host restriction factor antagonized by Mycobacterium tuberculosis PtpA during mycobacterial infection.</title>
        <authorList>
            <person name="Wang J."/>
            <person name="Teng J.L."/>
            <person name="Zhao D."/>
            <person name="Ge P."/>
            <person name="Li B."/>
            <person name="Woo P.C."/>
            <person name="Liu C.H."/>
        </authorList>
    </citation>
    <scope>INTERACTION WITH MYCOBACTERIUM TUBERCULOSIS PTPA (MICROBIAL INFECTION)</scope>
</reference>
<reference key="28">
    <citation type="journal article" date="2018" name="FASEB J.">
        <title>USP7-TRIM27 axis negatively modulates antiviral type I IFN signaling.</title>
        <authorList>
            <person name="Cai J."/>
            <person name="Chen H.Y."/>
            <person name="Peng S.J."/>
            <person name="Meng J.L."/>
            <person name="Wang Y."/>
            <person name="Zhou Y."/>
            <person name="Qian X.P."/>
            <person name="Sun X.Y."/>
            <person name="Pang X.W."/>
            <person name="Zhang Y."/>
            <person name="Zhang J."/>
        </authorList>
    </citation>
    <scope>FUNCTION</scope>
    <scope>INTERACTION WITH USP7</scope>
</reference>
<reference key="29">
    <citation type="journal article" date="2019" name="Inflammation">
        <title>TRIM27 Promotes Hepatitis C Virus Replication by Suppressing Type I Interferon Response.</title>
        <authorList>
            <person name="Zheng F."/>
            <person name="Xu N."/>
            <person name="Zhang Y."/>
        </authorList>
    </citation>
    <scope>FUNCTION (MICROBIAL INFECTION)</scope>
    <scope>INDUCTION BY TYPE I INTERFERONS AND HEPATITIS C VIRUS</scope>
</reference>
<reference key="30">
    <citation type="journal article" date="2022" name="FEBS J.">
        <title>TRIM27 is an autophagy substrate facilitating mitochondria clustering and mitophagy via phosphorylated TBK1.</title>
        <authorList>
            <person name="Garcia-Garcia J."/>
            <person name="Berge A.K.M."/>
            <person name="Overaa K.S."/>
            <person name="Larsen K.B."/>
            <person name="Bhujabal Z."/>
            <person name="Brech A."/>
            <person name="Abudu Y.P."/>
            <person name="Lamark T."/>
            <person name="Johansen T."/>
            <person name="Sjoettem E."/>
        </authorList>
    </citation>
    <scope>FUNCTION</scope>
    <scope>INTERACTION WITH SQSTM1</scope>
    <scope>SUBCELLULAR LOCATION</scope>
</reference>
<reference key="31">
    <citation type="journal article" date="2022" name="EMBO J.">
        <title>TRIM27 cooperates with STK38L to inhibit ULK1-mediated autophagy and promote tumorigenesis.</title>
        <authorList>
            <person name="Yang Y."/>
            <person name="Zhu Y."/>
            <person name="Zhou S."/>
            <person name="Tang P."/>
            <person name="Xu R."/>
            <person name="Zhang Y."/>
            <person name="Wei D."/>
            <person name="Wen J."/>
            <person name="Thorne R.F."/>
            <person name="Zhang X.D."/>
            <person name="Guan J.L."/>
            <person name="Liu L."/>
            <person name="Wu M."/>
            <person name="Chen S."/>
        </authorList>
    </citation>
    <scope>FUNCTION</scope>
    <scope>CATALYTIC ACTIVITY</scope>
    <scope>PATHWAY</scope>
</reference>
<keyword id="KW-0025">Alternative splicing</keyword>
<keyword id="KW-0160">Chromosomal rearrangement</keyword>
<keyword id="KW-0175">Coiled coil</keyword>
<keyword id="KW-0963">Cytoplasm</keyword>
<keyword id="KW-0238">DNA-binding</keyword>
<keyword id="KW-0967">Endosome</keyword>
<keyword id="KW-0479">Metal-binding</keyword>
<keyword id="KW-0496">Mitochondrion</keyword>
<keyword id="KW-0539">Nucleus</keyword>
<keyword id="KW-1267">Proteomics identification</keyword>
<keyword id="KW-0656">Proto-oncogene</keyword>
<keyword id="KW-1185">Reference proteome</keyword>
<keyword id="KW-0678">Repressor</keyword>
<keyword id="KW-0804">Transcription</keyword>
<keyword id="KW-0805">Transcription regulation</keyword>
<keyword id="KW-0808">Transferase</keyword>
<keyword id="KW-0813">Transport</keyword>
<keyword id="KW-0833">Ubl conjugation pathway</keyword>
<keyword id="KW-0862">Zinc</keyword>
<keyword id="KW-0863">Zinc-finger</keyword>
<organism>
    <name type="scientific">Homo sapiens</name>
    <name type="common">Human</name>
    <dbReference type="NCBI Taxonomy" id="9606"/>
    <lineage>
        <taxon>Eukaryota</taxon>
        <taxon>Metazoa</taxon>
        <taxon>Chordata</taxon>
        <taxon>Craniata</taxon>
        <taxon>Vertebrata</taxon>
        <taxon>Euteleostomi</taxon>
        <taxon>Mammalia</taxon>
        <taxon>Eutheria</taxon>
        <taxon>Euarchontoglires</taxon>
        <taxon>Primates</taxon>
        <taxon>Haplorrhini</taxon>
        <taxon>Catarrhini</taxon>
        <taxon>Hominidae</taxon>
        <taxon>Homo</taxon>
    </lineage>
</organism>
<gene>
    <name evidence="33 35" type="primary">TRIM27</name>
    <name evidence="32" type="synonym">RFP</name>
    <name type="synonym">RNF76</name>
</gene>